<dbReference type="EMBL" id="L23982">
    <property type="protein sequence ID" value="AAA58965.1"/>
    <property type="molecule type" value="Genomic_DNA"/>
</dbReference>
<dbReference type="EMBL" id="L02870">
    <property type="protein sequence ID" value="AAA75438.1"/>
    <property type="molecule type" value="mRNA"/>
</dbReference>
<dbReference type="EMBL" id="D13694">
    <property type="protein sequence ID" value="BAA02853.1"/>
    <property type="status" value="ALT_FRAME"/>
    <property type="molecule type" value="mRNA"/>
</dbReference>
<dbReference type="EMBL" id="M96984">
    <property type="protein sequence ID" value="AAA36357.2"/>
    <property type="molecule type" value="mRNA"/>
</dbReference>
<dbReference type="EMBL" id="S51236">
    <property type="protein sequence ID" value="AAB24637.1"/>
    <property type="molecule type" value="mRNA"/>
</dbReference>
<dbReference type="EMBL" id="M65158">
    <property type="protein sequence ID" value="AAA96439.1"/>
    <property type="molecule type" value="mRNA"/>
</dbReference>
<dbReference type="EMBL" id="L06862">
    <property type="protein sequence ID" value="AAA89196.1"/>
    <property type="molecule type" value="mRNA"/>
</dbReference>
<dbReference type="CCDS" id="CCDS2773.1">
    <molecule id="Q02388-1"/>
</dbReference>
<dbReference type="PIR" id="A54849">
    <property type="entry name" value="A54849"/>
</dbReference>
<dbReference type="RefSeq" id="NP_000085.1">
    <molecule id="Q02388-1"/>
    <property type="nucleotide sequence ID" value="NM_000094.4"/>
</dbReference>
<dbReference type="RefSeq" id="XP_011531639.1">
    <property type="nucleotide sequence ID" value="XM_011533337.1"/>
</dbReference>
<dbReference type="SMR" id="Q02388"/>
<dbReference type="BioGRID" id="107691">
    <property type="interactions" value="23"/>
</dbReference>
<dbReference type="ComplexPortal" id="CPX-1737">
    <property type="entry name" value="Collagen type VII trimer"/>
</dbReference>
<dbReference type="FunCoup" id="Q02388">
    <property type="interactions" value="260"/>
</dbReference>
<dbReference type="IntAct" id="Q02388">
    <property type="interactions" value="15"/>
</dbReference>
<dbReference type="MINT" id="Q02388"/>
<dbReference type="STRING" id="9606.ENSP00000332371"/>
<dbReference type="MEROPS" id="I02.967"/>
<dbReference type="GlyCosmos" id="Q02388">
    <property type="glycosylation" value="6 sites, 1 glycan"/>
</dbReference>
<dbReference type="GlyGen" id="Q02388">
    <property type="glycosylation" value="12 sites, 1 N-linked glycan (1 site), 1 O-linked glycan (2 sites)"/>
</dbReference>
<dbReference type="iPTMnet" id="Q02388"/>
<dbReference type="PhosphoSitePlus" id="Q02388"/>
<dbReference type="BioMuta" id="COL7A1"/>
<dbReference type="DMDM" id="1345650"/>
<dbReference type="jPOST" id="Q02388"/>
<dbReference type="MassIVE" id="Q02388"/>
<dbReference type="PaxDb" id="9606-ENSP00000332371"/>
<dbReference type="PeptideAtlas" id="Q02388"/>
<dbReference type="ProteomicsDB" id="58086">
    <molecule id="Q02388-1"/>
</dbReference>
<dbReference type="ProteomicsDB" id="58087">
    <molecule id="Q02388-2"/>
</dbReference>
<dbReference type="Pumba" id="Q02388"/>
<dbReference type="ABCD" id="Q02388">
    <property type="antibodies" value="1 sequenced antibody"/>
</dbReference>
<dbReference type="Antibodypedia" id="4284">
    <property type="antibodies" value="210 antibodies from 33 providers"/>
</dbReference>
<dbReference type="DNASU" id="1294"/>
<dbReference type="Ensembl" id="ENST00000328333.12">
    <molecule id="Q02388-1"/>
    <property type="protein sequence ID" value="ENSP00000332371.8"/>
    <property type="gene ID" value="ENSG00000114270.18"/>
</dbReference>
<dbReference type="Ensembl" id="ENST00000681320.1">
    <molecule id="Q02388-1"/>
    <property type="protein sequence ID" value="ENSP00000506558.1"/>
    <property type="gene ID" value="ENSG00000114270.18"/>
</dbReference>
<dbReference type="GeneID" id="1294"/>
<dbReference type="KEGG" id="hsa:1294"/>
<dbReference type="MANE-Select" id="ENST00000681320.1">
    <property type="protein sequence ID" value="ENSP00000506558.1"/>
    <property type="RefSeq nucleotide sequence ID" value="NM_000094.4"/>
    <property type="RefSeq protein sequence ID" value="NP_000085.1"/>
</dbReference>
<dbReference type="UCSC" id="uc003ctz.3">
    <molecule id="Q02388-1"/>
    <property type="organism name" value="human"/>
</dbReference>
<dbReference type="AGR" id="HGNC:2214"/>
<dbReference type="CTD" id="1294"/>
<dbReference type="DisGeNET" id="1294"/>
<dbReference type="GeneCards" id="COL7A1"/>
<dbReference type="GeneReviews" id="COL7A1"/>
<dbReference type="HGNC" id="HGNC:2214">
    <property type="gene designation" value="COL7A1"/>
</dbReference>
<dbReference type="HPA" id="ENSG00000114270">
    <property type="expression patterns" value="Tissue enhanced (skin)"/>
</dbReference>
<dbReference type="MalaCards" id="COL7A1"/>
<dbReference type="MIM" id="120120">
    <property type="type" value="gene"/>
</dbReference>
<dbReference type="MIM" id="131705">
    <property type="type" value="phenotype"/>
</dbReference>
<dbReference type="MIM" id="131750">
    <property type="type" value="phenotype"/>
</dbReference>
<dbReference type="MIM" id="131850">
    <property type="type" value="phenotype"/>
</dbReference>
<dbReference type="MIM" id="132000">
    <property type="type" value="phenotype"/>
</dbReference>
<dbReference type="MIM" id="226600">
    <property type="type" value="phenotype"/>
</dbReference>
<dbReference type="MIM" id="604129">
    <property type="type" value="phenotype"/>
</dbReference>
<dbReference type="MIM" id="607523">
    <property type="type" value="phenotype"/>
</dbReference>
<dbReference type="neXtProt" id="NX_Q02388"/>
<dbReference type="OpenTargets" id="ENSG00000114270"/>
<dbReference type="Orphanet" id="231568">
    <property type="disease" value="Autosomal dominant generalized dystrophic epidermolysis bullosa"/>
</dbReference>
<dbReference type="Orphanet" id="89842">
    <property type="disease" value="Autosomal recessive generalized dystrophic epidermolysis bullosa, intermediate form"/>
</dbReference>
<dbReference type="Orphanet" id="79408">
    <property type="disease" value="Autosomal recessive generalized dystrophic epidermolysis bullosa, severe form"/>
</dbReference>
<dbReference type="Orphanet" id="89843">
    <property type="disease" value="Dystrophic epidermolysis bullosa pruriginosa"/>
</dbReference>
<dbReference type="Orphanet" id="158673">
    <property type="disease" value="Localized dystrophic epidermolysis bullosa, acral form"/>
</dbReference>
<dbReference type="Orphanet" id="158676">
    <property type="disease" value="Localized dystrophic epidermolysis bullosa, nails only"/>
</dbReference>
<dbReference type="Orphanet" id="79410">
    <property type="disease" value="Localized dystrophic epidermolysis bullosa, pretibial form"/>
</dbReference>
<dbReference type="Orphanet" id="79409">
    <property type="disease" value="Recessive dystrophic epidermolysis bullosa inversa"/>
</dbReference>
<dbReference type="Orphanet" id="79411">
    <property type="disease" value="Self-improving dystrophic epidermolysis bullosa"/>
</dbReference>
<dbReference type="PharmGKB" id="PA26730"/>
<dbReference type="VEuPathDB" id="HostDB:ENSG00000114270"/>
<dbReference type="eggNOG" id="KOG3544">
    <property type="taxonomic scope" value="Eukaryota"/>
</dbReference>
<dbReference type="GeneTree" id="ENSGT00940000154865"/>
<dbReference type="HOGENOM" id="CLU_000510_0_0_1"/>
<dbReference type="InParanoid" id="Q02388"/>
<dbReference type="OMA" id="QTFFAVD"/>
<dbReference type="OrthoDB" id="9940467at2759"/>
<dbReference type="PAN-GO" id="Q02388">
    <property type="GO annotations" value="2 GO annotations based on evolutionary models"/>
</dbReference>
<dbReference type="PhylomeDB" id="Q02388"/>
<dbReference type="TreeFam" id="TF351645"/>
<dbReference type="PathwayCommons" id="Q02388"/>
<dbReference type="Reactome" id="R-HSA-1442490">
    <property type="pathway name" value="Collagen degradation"/>
</dbReference>
<dbReference type="Reactome" id="R-HSA-1474244">
    <property type="pathway name" value="Extracellular matrix organization"/>
</dbReference>
<dbReference type="Reactome" id="R-HSA-1650814">
    <property type="pathway name" value="Collagen biosynthesis and modifying enzymes"/>
</dbReference>
<dbReference type="Reactome" id="R-HSA-2022090">
    <property type="pathway name" value="Assembly of collagen fibrils and other multimeric structures"/>
</dbReference>
<dbReference type="Reactome" id="R-HSA-204005">
    <property type="pathway name" value="COPII-mediated vesicle transport"/>
</dbReference>
<dbReference type="Reactome" id="R-HSA-216083">
    <property type="pathway name" value="Integrin cell surface interactions"/>
</dbReference>
<dbReference type="Reactome" id="R-HSA-2214320">
    <property type="pathway name" value="Anchoring fibril formation"/>
</dbReference>
<dbReference type="Reactome" id="R-HSA-3000157">
    <property type="pathway name" value="Laminin interactions"/>
</dbReference>
<dbReference type="Reactome" id="R-HSA-5694530">
    <property type="pathway name" value="Cargo concentration in the ER"/>
</dbReference>
<dbReference type="Reactome" id="R-HSA-8948216">
    <property type="pathway name" value="Collagen chain trimerization"/>
</dbReference>
<dbReference type="SignaLink" id="Q02388"/>
<dbReference type="SIGNOR" id="Q02388"/>
<dbReference type="BioGRID-ORCS" id="1294">
    <property type="hits" value="19 hits in 1154 CRISPR screens"/>
</dbReference>
<dbReference type="ChiTaRS" id="COL7A1">
    <property type="organism name" value="human"/>
</dbReference>
<dbReference type="GeneWiki" id="Collagen,_type_VII,_alpha_1"/>
<dbReference type="GenomeRNAi" id="1294"/>
<dbReference type="Pharos" id="Q02388">
    <property type="development level" value="Tbio"/>
</dbReference>
<dbReference type="PRO" id="PR:Q02388"/>
<dbReference type="Proteomes" id="UP000005640">
    <property type="component" value="Chromosome 3"/>
</dbReference>
<dbReference type="RNAct" id="Q02388">
    <property type="molecule type" value="protein"/>
</dbReference>
<dbReference type="Bgee" id="ENSG00000114270">
    <property type="expression patterns" value="Expressed in stromal cell of endometrium and 187 other cell types or tissues"/>
</dbReference>
<dbReference type="ExpressionAtlas" id="Q02388">
    <property type="expression patterns" value="baseline and differential"/>
</dbReference>
<dbReference type="GO" id="GO:0005604">
    <property type="term" value="C:basement membrane"/>
    <property type="evidence" value="ECO:0000318"/>
    <property type="project" value="GO_Central"/>
</dbReference>
<dbReference type="GO" id="GO:0005590">
    <property type="term" value="C:collagen type VII trimer"/>
    <property type="evidence" value="ECO:0000304"/>
    <property type="project" value="ProtInc"/>
</dbReference>
<dbReference type="GO" id="GO:0062023">
    <property type="term" value="C:collagen-containing extracellular matrix"/>
    <property type="evidence" value="ECO:0007005"/>
    <property type="project" value="BHF-UCL"/>
</dbReference>
<dbReference type="GO" id="GO:0030134">
    <property type="term" value="C:COPII-coated ER to Golgi transport vesicle"/>
    <property type="evidence" value="ECO:0000304"/>
    <property type="project" value="Reactome"/>
</dbReference>
<dbReference type="GO" id="GO:0005788">
    <property type="term" value="C:endoplasmic reticulum lumen"/>
    <property type="evidence" value="ECO:0000304"/>
    <property type="project" value="Reactome"/>
</dbReference>
<dbReference type="GO" id="GO:0033116">
    <property type="term" value="C:endoplasmic reticulum-Golgi intermediate compartment membrane"/>
    <property type="evidence" value="ECO:0000304"/>
    <property type="project" value="Reactome"/>
</dbReference>
<dbReference type="GO" id="GO:0005576">
    <property type="term" value="C:extracellular region"/>
    <property type="evidence" value="ECO:0000304"/>
    <property type="project" value="Reactome"/>
</dbReference>
<dbReference type="GO" id="GO:0005615">
    <property type="term" value="C:extracellular space"/>
    <property type="evidence" value="ECO:0007005"/>
    <property type="project" value="UniProtKB"/>
</dbReference>
<dbReference type="GO" id="GO:0030020">
    <property type="term" value="F:extracellular matrix structural constituent conferring tensile strength"/>
    <property type="evidence" value="ECO:0007005"/>
    <property type="project" value="BHF-UCL"/>
</dbReference>
<dbReference type="GO" id="GO:0004867">
    <property type="term" value="F:serine-type endopeptidase inhibitor activity"/>
    <property type="evidence" value="ECO:0007669"/>
    <property type="project" value="UniProtKB-KW"/>
</dbReference>
<dbReference type="GO" id="GO:0007155">
    <property type="term" value="P:cell adhesion"/>
    <property type="evidence" value="ECO:0007669"/>
    <property type="project" value="UniProtKB-KW"/>
</dbReference>
<dbReference type="GO" id="GO:0035987">
    <property type="term" value="P:endodermal cell differentiation"/>
    <property type="evidence" value="ECO:0000270"/>
    <property type="project" value="UniProtKB"/>
</dbReference>
<dbReference type="GO" id="GO:0008544">
    <property type="term" value="P:epidermis development"/>
    <property type="evidence" value="ECO:0000304"/>
    <property type="project" value="ProtInc"/>
</dbReference>
<dbReference type="CDD" id="cd00063">
    <property type="entry name" value="FN3"/>
    <property type="match status" value="9"/>
</dbReference>
<dbReference type="CDD" id="cd22627">
    <property type="entry name" value="Kunitz_collagen_alpha1_VII"/>
    <property type="match status" value="1"/>
</dbReference>
<dbReference type="CDD" id="cd01482">
    <property type="entry name" value="vWA_collagen_alphaI-XII-like"/>
    <property type="match status" value="1"/>
</dbReference>
<dbReference type="CDD" id="cd01450">
    <property type="entry name" value="vWFA_subfamily_ECM"/>
    <property type="match status" value="1"/>
</dbReference>
<dbReference type="DisProt" id="DP02163"/>
<dbReference type="FunFam" id="3.40.50.410:FF:000072">
    <property type="entry name" value="collagen alpha-1(VII) chain"/>
    <property type="match status" value="1"/>
</dbReference>
<dbReference type="FunFam" id="4.10.410.10:FF:000019">
    <property type="entry name" value="collagen alpha-1(VII) chain"/>
    <property type="match status" value="1"/>
</dbReference>
<dbReference type="FunFam" id="2.60.40.10:FF:000307">
    <property type="entry name" value="collagen alpha-1(VII) chain isoform X1"/>
    <property type="match status" value="5"/>
</dbReference>
<dbReference type="FunFam" id="2.60.40.10:FF:001333">
    <property type="entry name" value="collagen alpha-1(VII) chain isoform X2"/>
    <property type="match status" value="1"/>
</dbReference>
<dbReference type="FunFam" id="2.60.40.10:FF:001566">
    <property type="entry name" value="collagen alpha-1(VII) chain isoform X2"/>
    <property type="match status" value="1"/>
</dbReference>
<dbReference type="FunFam" id="2.60.40.10:FF:001646">
    <property type="entry name" value="Collagen, type VII, alpha 1"/>
    <property type="match status" value="1"/>
</dbReference>
<dbReference type="FunFam" id="3.40.50.410:FF:000001">
    <property type="entry name" value="Collagen, type XII, alpha 1"/>
    <property type="match status" value="1"/>
</dbReference>
<dbReference type="FunFam" id="2.60.40.10:FF:001175">
    <property type="entry name" value="Putative collagen alpha-1vii chain"/>
    <property type="match status" value="1"/>
</dbReference>
<dbReference type="Gene3D" id="1.20.5.320">
    <property type="entry name" value="6-Phosphogluconate Dehydrogenase, domain 3"/>
    <property type="match status" value="1"/>
</dbReference>
<dbReference type="Gene3D" id="2.60.40.10">
    <property type="entry name" value="Immunoglobulins"/>
    <property type="match status" value="9"/>
</dbReference>
<dbReference type="Gene3D" id="4.10.410.10">
    <property type="entry name" value="Pancreatic trypsin inhibitor Kunitz domain"/>
    <property type="match status" value="1"/>
</dbReference>
<dbReference type="Gene3D" id="3.40.50.410">
    <property type="entry name" value="von Willebrand factor, type A domain"/>
    <property type="match status" value="2"/>
</dbReference>
<dbReference type="InterPro" id="IPR008160">
    <property type="entry name" value="Collagen"/>
</dbReference>
<dbReference type="InterPro" id="IPR050938">
    <property type="entry name" value="Collagen_Structural_Proteins"/>
</dbReference>
<dbReference type="InterPro" id="IPR003961">
    <property type="entry name" value="FN3_dom"/>
</dbReference>
<dbReference type="InterPro" id="IPR036116">
    <property type="entry name" value="FN3_sf"/>
</dbReference>
<dbReference type="InterPro" id="IPR013783">
    <property type="entry name" value="Ig-like_fold"/>
</dbReference>
<dbReference type="InterPro" id="IPR002223">
    <property type="entry name" value="Kunitz_BPTI"/>
</dbReference>
<dbReference type="InterPro" id="IPR036880">
    <property type="entry name" value="Kunitz_BPTI_sf"/>
</dbReference>
<dbReference type="InterPro" id="IPR020901">
    <property type="entry name" value="Prtase_inh_Kunz-CS"/>
</dbReference>
<dbReference type="InterPro" id="IPR002035">
    <property type="entry name" value="VWF_A"/>
</dbReference>
<dbReference type="InterPro" id="IPR036465">
    <property type="entry name" value="vWFA_dom_sf"/>
</dbReference>
<dbReference type="PANTHER" id="PTHR37456:SF6">
    <property type="entry name" value="COLLAGEN ALPHA-1(XXIII) CHAIN-LIKE ISOFORM X2"/>
    <property type="match status" value="1"/>
</dbReference>
<dbReference type="PANTHER" id="PTHR37456">
    <property type="entry name" value="SI:CH211-266K2.1"/>
    <property type="match status" value="1"/>
</dbReference>
<dbReference type="Pfam" id="PF01391">
    <property type="entry name" value="Collagen"/>
    <property type="match status" value="18"/>
</dbReference>
<dbReference type="Pfam" id="PF00041">
    <property type="entry name" value="fn3"/>
    <property type="match status" value="8"/>
</dbReference>
<dbReference type="Pfam" id="PF00014">
    <property type="entry name" value="Kunitz_BPTI"/>
    <property type="match status" value="1"/>
</dbReference>
<dbReference type="Pfam" id="PF00092">
    <property type="entry name" value="VWA"/>
    <property type="match status" value="2"/>
</dbReference>
<dbReference type="PRINTS" id="PR00759">
    <property type="entry name" value="BASICPTASE"/>
</dbReference>
<dbReference type="PRINTS" id="PR00453">
    <property type="entry name" value="VWFADOMAIN"/>
</dbReference>
<dbReference type="SMART" id="SM00060">
    <property type="entry name" value="FN3"/>
    <property type="match status" value="9"/>
</dbReference>
<dbReference type="SMART" id="SM00327">
    <property type="entry name" value="VWA"/>
    <property type="match status" value="1"/>
</dbReference>
<dbReference type="SUPFAM" id="SSF57362">
    <property type="entry name" value="BPTI-like"/>
    <property type="match status" value="1"/>
</dbReference>
<dbReference type="SUPFAM" id="SSF49265">
    <property type="entry name" value="Fibronectin type III"/>
    <property type="match status" value="5"/>
</dbReference>
<dbReference type="SUPFAM" id="SSF53300">
    <property type="entry name" value="vWA-like"/>
    <property type="match status" value="2"/>
</dbReference>
<dbReference type="PROSITE" id="PS00280">
    <property type="entry name" value="BPTI_KUNITZ_1"/>
    <property type="match status" value="1"/>
</dbReference>
<dbReference type="PROSITE" id="PS50279">
    <property type="entry name" value="BPTI_KUNITZ_2"/>
    <property type="match status" value="1"/>
</dbReference>
<dbReference type="PROSITE" id="PS50853">
    <property type="entry name" value="FN3"/>
    <property type="match status" value="9"/>
</dbReference>
<dbReference type="PROSITE" id="PS50234">
    <property type="entry name" value="VWFA"/>
    <property type="match status" value="2"/>
</dbReference>
<sequence length="2944" mass="295220">MTLRLLVAALCAGILAEAPRVRAQHRERVTCTRLYAADIVFLLDGSSSIGRSNFREVRSFLEGLVLPFSGAASAQGVRFATVQYSDDPRTEFGLDALGSGGDVIRAIRELSYKGGNTRTGAAILHVADHVFLPQLARPGVPKVCILITDGKSQDLVDTAAQRLKGQGVKLFAVGIKNADPEELKRVASQPTSDFFFFVNDFSILRTLLPLVSRRVCTTAGGVPVTRPPDDSTSAPRDLVLSEPSSQSLRVQWTAASGPVTGYKVQYTPLTGLGQPLPSERQEVNVPAGETSVRLRGLRPLTEYQVTVIALYANSIGEAVSGTARTTALEGPELTIQNTTAHSLLVAWRSVPGATGYRVTWRVLSGGPTQQQELGPGQGSVLLRDLEPGTDYEVTVSTLFGRSVGPATSLMARTDASVEQTLRPVILGPTSILLSWNLVPEARGYRLEWRRETGLEPPQKVVLPSDVTRYQLDGLQPGTEYRLTLYTLLEGHEVATPATVVPTGPELPVSPVTDLQATELPGQRVRVSWSPVPGATQYRIIVRSTQGVERTLVLPGSQTAFDLDDVQAGLSYTVRVSARVGPREGSASVLTVRREPETPLAVPGLRVVVSDATRVRVAWGPVPGASGFRISWSTGSGPESSQTLPPDSTATDITGLQPGTTYQVAVSVLRGREEGPAAVIVARTDPLGPVRTVHVTQASSSSVTITWTRVPGATGYRVSWHSAHGPEKSQLVSGEATVAELDGLEPDTEYTVHVRAHVAGVDGPPASVVVRTAPEPVGRVSRLQILNASSDVLRITWVGVTGATAYRLAWGRSEGGPMRHQILPGNTDSAEIRGLEGGVSYSVRVTALVGDREGTPVSIVVTTPPEAPPALGTLHVVQRGEHSLRLRWEPVPRAQGFLLHWQPEGGQEQSRVLGPELSSYHLDGLEPATQYRVRLSVLGPAGEGPSAEVTARTESPRVPSIELRVVDTSIDSVTLAWTPVSRASSYILSWRPLRGPGQEVPGSPQTLPGISSSQRVTGLEPGVSYIFSLTPVLDGVRGPEASVTQTPVCPRGLADVVFLPHATQDNAHRAEATRRVLERLVLALGPLGPQAVQVGLLSYSHRPSPLFPLNGSHDLGIILQRIRDMPYMDPSGNNLGTAVVTAHRYMLAPDAPGRRQHVPGVMVLLVDEPLRGDIFSPIREAQASGLNVVMLGMAGADPEQLRRLAPGMDSVQTFFAVDDGPSLDQAVSGLATALCQASFTTQPRPEPCPVYCPKGQKGEPGEMGLRGQVGPPGDPGLPGRTGAPGPQGPPGSATAKGERGFPGADGRPGSPGRAGNPGTPGAPGLKGSPGLPGPRGDPGERGPRGPKGEPGAPGQVIGGEGPGLPGRKGDPGPSGPPGPRGPLGDPGPRGPPGLPGTAMKGDKGDRGERGPPGPGEGGIAPGEPGLPGLPGSPGPQGPVGPPGKKGEKGDSEDGAPGLPGQPGSPGEQGPRGPPGAIGPKGDRGFPGPLGEAGEKGERGPPGPAGSRGLPGVAGRPGAKGPEGPPGPTGRQGEKGEPGRPGDPAVVGPAVAGPKGEKGDVGPAGPRGATGVQGERGPPGLVLPGDPGPKGDPGDRGPIGLTGRAGPPGDSGPPGEKGDPGRPGPPGPVGPRGRDGEVGEKGDEGPPGDPGLPGKAGERGLRGAPGVRGPVGEKGDQGDPGEDGRNGSPGSSGPKGDRGEPGPPGPPGRLVDTGPGAREKGEPGDRGQEGPRGPKGDPGLPGAPGERGIEGFRGPPGPQGDPGVRGPAGEKGDRGPPGLDGRSGLDGKPGAAGPSGPNGAAGKAGDPGRDGLPGLRGEQGLPGPSGPPGLPGKPGEDGKPGLNGKNGEPGDPGEDGRKGEKGDSGASGREGRDGPKGERGAPGILGPQGPPGLPGPVGPPGQGFPGVPGGTGPKGDRGETGSKGEQGLPGERGLRGEPGSVPNVDRLLETAGIKASALREIVETWDESSGSFLPVPERRRGPKGDSGEQGPPGKEGPIGFPGERGLKGDRGDPGPQGPPGLALGERGPPGPSGLAGEPGKPGIPGLPGRAGGVGEAGRPGERGERGEKGERGEQGRDGPPGLPGTPGPPGPPGPKVSVDEPGPGLSGEQGPPGLKGAKGEPGSNGDQGPKGDRGVPGIKGDRGEPGPRGQDGNPGLPGERGMAGPEGKPGLQGPRGPPGPVGGHGDPGPPGAPGLAGPAGPQGPSGLKGEPGETGPPGRGLTGPTGAVGLPGPPGPSGLVGPQGSPGLPGQVGETGKPGAPGRDGASGKDGDRGSPGVPGSPGLPGPVGPKGEPGPTGAPGQAVVGLPGAKGEKGAPGGLAGDLVGEPGAKGDRGLPGPRGEKGEAGRAGEPGDPGEDGQKGAPGPKGFKGDPGVGVPGSPGPPGPPGVKGDLGLPGLPGAPGVVGFPGQTGPRGEMGQPGPSGERGLAGPPGREGIPGPLGPPGPPGSVGPPGASGLKGDKGDPGVGLPGPRGERGEPGIRGEDGRPGQEGPRGLTGPPGSRGERGEKGDVGSAGLKGDKGDSAVILGPPGPRGAKGDMGERGPRGLDGDKGPRGDNGDPGDKGSKGEPGDKGSAGLPGLRGLLGPQGQPGAAGIPGDPGSPGKDGVPGIRGEKGDVGFMGPRGLKGERGVKGACGLDGEKGDKGEAGPPGRPGLAGHKGEMGEPGVPGQSGAPGKEGLIGPKGDRGFDGQPGPKGDQGEKGERGTPGIGGFPGPSGNDGSAGPPGPPGSVGPRGPEGLQGQKGERGPPGERVVGAPGVPGAPGERGEQGRPGPAGPRGEKGEAALTEDDIRGFVRQEMSQHCACQGQFIASGSRPLPSYAADTAGSQLHAVPVLRVSHAEEEERVPPEDDEYSEYSEYSVEEYQDPEAPWDSDDPCSLPLDEGSCTAYTLRWYHRAVTGSTEACHPFVYGGCGGNANRFGTREACERRCPPRVVQSQGTGTAQD</sequence>
<accession>Q02388</accession>
<accession>Q14054</accession>
<accession>Q16507</accession>
<protein>
    <recommendedName>
        <fullName>Collagen alpha-1(VII) chain</fullName>
    </recommendedName>
    <alternativeName>
        <fullName>Long-chain collagen</fullName>
        <shortName>LC collagen</shortName>
    </alternativeName>
</protein>
<comment type="function">
    <text>Stratified squamous epithelial basement membrane protein that forms anchoring fibrils which may contribute to epithelial basement membrane organization and adherence by interacting with extracellular matrix (ECM) proteins such as type IV collagen.</text>
</comment>
<comment type="subunit">
    <text evidence="23">Homotrimer. Interacts with MIA3/TANGO1; facilitating its loading into transport carriers and subsequent secretion.</text>
</comment>
<comment type="interaction">
    <interactant intactId="EBI-724237">
        <id>Q02388</id>
    </interactant>
    <interactant intactId="EBI-2291868">
        <id>Q5JRA6</id>
        <label>MIA3</label>
    </interactant>
    <organismsDiffer>false</organismsDiffer>
    <experiments>2</experiments>
</comment>
<comment type="subcellular location">
    <subcellularLocation>
        <location>Secreted</location>
        <location>Extracellular space</location>
        <location>Extracellular matrix</location>
        <location>Basement membrane</location>
    </subcellularLocation>
</comment>
<comment type="alternative products">
    <event type="alternative splicing"/>
    <isoform>
        <id>Q02388-1</id>
        <name>1</name>
        <sequence type="displayed"/>
    </isoform>
    <isoform>
        <id>Q02388-2</id>
        <name>2</name>
        <sequence type="described" ref="VSP_024026"/>
    </isoform>
</comment>
<comment type="PTM">
    <text evidence="26">Prolines at the third position of the tripeptide repeating unit (G-X-Y) are hydroxylated in some or all of the chains.</text>
</comment>
<comment type="disease">
    <text>Epidermolysis bullosa acquisita (EBA) is an autoimmune acquired blistering skin disease resulting from autoantibodies to type VII collagen.</text>
</comment>
<comment type="disease" evidence="7 8 9 10 11 14 16 17 25 28 30 35 38 41 42 44">
    <disease id="DI-00451">
        <name>Epidermolysis bullosa dystrophica, autosomal dominant</name>
        <acronym>DDEB</acronym>
        <description>A group of autosomal dominant blistering skin diseases characterized by tissue separation which occurs below the dermal-epidermal basement membrane at the level of the anchoring fibrils. Various clinical types with different severity are recognized, ranging from severe mutilating forms to mild forms with limited and localized scarring, and less frequent extracutaneous manifestations.</description>
        <dbReference type="MIM" id="131750"/>
    </disease>
    <text>The disease is caused by variants affecting the gene represented in this entry.</text>
</comment>
<comment type="disease" evidence="7 13 14 15 18 21 24 25 31 33 34 35 36 37 38 39 40 42 43">
    <disease id="DI-03090">
        <name>Epidermolysis bullosa dystrophica, autosomal recessive</name>
        <acronym>RDEB</acronym>
        <description>A group of autosomal recessive blistering skin diseases characterized by tissue separation which occurs below the dermal-epidermal basement membrane at the level of the anchoring fibrils. Various clinical types with different severity are recognized, ranging from severe mutilating forms, such as epidermolysis bullosa dystrophica Hallopeau-Siemens type, to mild forms with limited localized scarring and less frequent extracutaneous manifestations. Mild forms include epidermolysis bullosa mitis and epidermolysis bullosa localisata.</description>
        <dbReference type="MIM" id="226600"/>
    </disease>
    <text>The disease is caused by variants affecting the gene represented in this entry.</text>
</comment>
<comment type="disease" evidence="45">
    <disease id="DI-01103">
        <name>Transient bullous dermolysis of the newborn</name>
        <acronym>TBDN</acronym>
        <description>TBDN is a neonatal form of dystrophic epidermolysis bullosa characterized by sub-epidermal blisters, reduced or abnormal anchoring fibrils at the dermo-epidermal junction, and electron-dense inclusions in keratinocytes. TBDN heals spontaneously or strongly improves within the first months and years of life.</description>
        <dbReference type="MIM" id="131705"/>
    </disease>
    <text>The disease is caused by variants affecting the gene represented in this entry.</text>
</comment>
<comment type="disease" evidence="32">
    <disease id="DI-00455">
        <name>Epidermolysis bullosa dystrophica, pretibial type</name>
        <acronym>PR-DEB</acronym>
        <description>A form of dystrophic epidermolysis bullosa characterized by pretibial blisters that develop into prurigo-like hyperkeratotic lesions. It predominantly affects the pretibial areas, sparing the knees and other parts of the skin. Other clinical features include nail dystrophy, albopapuloid skin lesions, and hypertrophic scars without pretibial predominance. The phenotype shows considerable interindividual variability. Inheritance is autosomal dominant.</description>
        <dbReference type="MIM" id="131850"/>
    </disease>
    <text>The disease is caused by variants affecting the gene represented in this entry.</text>
</comment>
<comment type="disease">
    <disease id="DI-00452">
        <name>Epidermolysis bullosa dystrophica, Bart type</name>
        <acronym>B-DEB</acronym>
        <description>An autosomal dominant form of dystrophic epidermolysis bullosa characterized by congenital localized absence of skin, skin fragility and deformity of nails.</description>
        <dbReference type="MIM" id="132000"/>
    </disease>
    <text>The disease is caused by variants affecting the gene represented in this entry.</text>
</comment>
<comment type="disease" evidence="12 17">
    <disease id="DI-00460">
        <name>Epidermolysis bullosa pruriginosa</name>
        <acronym>EBP</acronym>
        <description>A distinct clinical subtype of epidermolysis bullosa dystrophica. It is characterized by skin fragility, blistering, scar formation, intense pruritus and excoriated prurigo nodules. Onset is in early childhood, but in some cases is delayed until the second or third decade of life. Inheritance can be autosomal dominant or recessive.</description>
        <dbReference type="MIM" id="604129"/>
    </disease>
    <text>The disease is caused by variants affecting the gene represented in this entry.</text>
</comment>
<comment type="disease" evidence="19">
    <disease id="DI-01844">
        <name>Nail disorder, non-syndromic congenital, 8</name>
        <acronym>NDNC8</acronym>
        <description>A nail disorder characterized by isolated toenail dystrophy. The nail changes are most severe in the great toes and consist of the nail plate being buried in the nail bed with a deformed and narrow free edge.</description>
        <dbReference type="MIM" id="607523"/>
    </disease>
    <text>The disease is caused by variants affecting the gene represented in this entry.</text>
</comment>
<comment type="disease" evidence="20 27">
    <disease id="DI-00456">
        <name>Epidermolysis bullosa dystrophica, with subcorneal cleavage</name>
        <acronym>EBDSC</acronym>
        <description>A bullous skin disorder with variable sized clefts just beneath the level of the stratum corneum. Clinical features include blisters, milia, atrophic scarring, nail dystrophy, and oral and conjunctival involvement, as seen in dystrophic epidermolysis bullosa.</description>
        <dbReference type="MIM" id="131750"/>
    </disease>
    <text>The disease is caused by variants affecting the gene represented in this entry.</text>
</comment>
<comment type="sequence caution" evidence="46">
    <conflict type="frameshift">
        <sequence resource="EMBL-CDS" id="BAA02853"/>
    </conflict>
</comment>
<gene>
    <name type="primary">COL7A1</name>
</gene>
<name>CO7A1_HUMAN</name>
<evidence type="ECO:0000250" key="1"/>
<evidence type="ECO:0000255" key="2"/>
<evidence type="ECO:0000255" key="3">
    <source>
        <dbReference type="PROSITE-ProRule" id="PRU00031"/>
    </source>
</evidence>
<evidence type="ECO:0000255" key="4">
    <source>
        <dbReference type="PROSITE-ProRule" id="PRU00219"/>
    </source>
</evidence>
<evidence type="ECO:0000255" key="5">
    <source>
        <dbReference type="PROSITE-ProRule" id="PRU00316"/>
    </source>
</evidence>
<evidence type="ECO:0000256" key="6">
    <source>
        <dbReference type="SAM" id="MobiDB-lite"/>
    </source>
</evidence>
<evidence type="ECO:0000269" key="7">
    <source>
    </source>
</evidence>
<evidence type="ECO:0000269" key="8">
    <source>
    </source>
</evidence>
<evidence type="ECO:0000269" key="9">
    <source>
    </source>
</evidence>
<evidence type="ECO:0000269" key="10">
    <source>
    </source>
</evidence>
<evidence type="ECO:0000269" key="11">
    <source>
    </source>
</evidence>
<evidence type="ECO:0000269" key="12">
    <source>
    </source>
</evidence>
<evidence type="ECO:0000269" key="13">
    <source>
    </source>
</evidence>
<evidence type="ECO:0000269" key="14">
    <source>
    </source>
</evidence>
<evidence type="ECO:0000269" key="15">
    <source>
    </source>
</evidence>
<evidence type="ECO:0000269" key="16">
    <source>
    </source>
</evidence>
<evidence type="ECO:0000269" key="17">
    <source>
    </source>
</evidence>
<evidence type="ECO:0000269" key="18">
    <source>
    </source>
</evidence>
<evidence type="ECO:0000269" key="19">
    <source>
    </source>
</evidence>
<evidence type="ECO:0000269" key="20">
    <source>
    </source>
</evidence>
<evidence type="ECO:0000269" key="21">
    <source>
    </source>
</evidence>
<evidence type="ECO:0000269" key="22">
    <source>
    </source>
</evidence>
<evidence type="ECO:0000269" key="23">
    <source>
    </source>
</evidence>
<evidence type="ECO:0000269" key="24">
    <source>
    </source>
</evidence>
<evidence type="ECO:0000269" key="25">
    <source>
    </source>
</evidence>
<evidence type="ECO:0000269" key="26">
    <source>
    </source>
</evidence>
<evidence type="ECO:0000269" key="27">
    <source>
    </source>
</evidence>
<evidence type="ECO:0000269" key="28">
    <source>
    </source>
</evidence>
<evidence type="ECO:0000269" key="29">
    <source>
    </source>
</evidence>
<evidence type="ECO:0000269" key="30">
    <source>
    </source>
</evidence>
<evidence type="ECO:0000269" key="31">
    <source>
    </source>
</evidence>
<evidence type="ECO:0000269" key="32">
    <source>
    </source>
</evidence>
<evidence type="ECO:0000269" key="33">
    <source>
    </source>
</evidence>
<evidence type="ECO:0000269" key="34">
    <source>
    </source>
</evidence>
<evidence type="ECO:0000269" key="35">
    <source>
    </source>
</evidence>
<evidence type="ECO:0000269" key="36">
    <source>
    </source>
</evidence>
<evidence type="ECO:0000269" key="37">
    <source>
    </source>
</evidence>
<evidence type="ECO:0000269" key="38">
    <source>
    </source>
</evidence>
<evidence type="ECO:0000269" key="39">
    <source>
    </source>
</evidence>
<evidence type="ECO:0000269" key="40">
    <source>
    </source>
</evidence>
<evidence type="ECO:0000269" key="41">
    <source>
    </source>
</evidence>
<evidence type="ECO:0000269" key="42">
    <source>
    </source>
</evidence>
<evidence type="ECO:0000269" key="43">
    <source>
    </source>
</evidence>
<evidence type="ECO:0000269" key="44">
    <source>
    </source>
</evidence>
<evidence type="ECO:0000269" key="45">
    <source>
    </source>
</evidence>
<evidence type="ECO:0000305" key="46"/>
<proteinExistence type="evidence at protein level"/>
<feature type="signal peptide" evidence="2">
    <location>
        <begin position="1"/>
        <end position="16"/>
    </location>
</feature>
<feature type="chain" id="PRO_0000005761" description="Collagen alpha-1(VII) chain">
    <location>
        <begin position="17"/>
        <end position="2944"/>
    </location>
</feature>
<feature type="domain" description="VWFA 1" evidence="4">
    <location>
        <begin position="38"/>
        <end position="211"/>
    </location>
</feature>
<feature type="domain" description="Fibronectin type-III 1" evidence="5">
    <location>
        <begin position="234"/>
        <end position="329"/>
    </location>
</feature>
<feature type="domain" description="Fibronectin type-III 2" evidence="5">
    <location>
        <begin position="330"/>
        <end position="416"/>
    </location>
</feature>
<feature type="domain" description="Fibronectin type-III 3" evidence="5">
    <location>
        <begin position="417"/>
        <end position="507"/>
    </location>
</feature>
<feature type="domain" description="Fibronectin type-III 4" evidence="5">
    <location>
        <begin position="510"/>
        <end position="597"/>
    </location>
</feature>
<feature type="domain" description="Fibronectin type-III 5" evidence="5">
    <location>
        <begin position="600"/>
        <end position="687"/>
    </location>
</feature>
<feature type="domain" description="Fibronectin type-III 6" evidence="5">
    <location>
        <begin position="688"/>
        <end position="775"/>
    </location>
</feature>
<feature type="domain" description="Fibronectin type-III 7" evidence="5">
    <location>
        <begin position="778"/>
        <end position="866"/>
    </location>
</feature>
<feature type="domain" description="Fibronectin type-III 8" evidence="5">
    <location>
        <begin position="869"/>
        <end position="957"/>
    </location>
</feature>
<feature type="domain" description="Fibronectin type-III 9" evidence="5">
    <location>
        <begin position="958"/>
        <end position="1051"/>
    </location>
</feature>
<feature type="domain" description="VWFA 2" evidence="4">
    <location>
        <begin position="1054"/>
        <end position="1229"/>
    </location>
</feature>
<feature type="domain" description="BPTI/Kunitz inhibitor" evidence="3">
    <location>
        <begin position="2872"/>
        <end position="2944"/>
    </location>
</feature>
<feature type="region of interest" description="Nonhelical region (NC1)">
    <location>
        <begin position="17"/>
        <end position="1253"/>
    </location>
</feature>
<feature type="region of interest" description="Disordered" evidence="6">
    <location>
        <begin position="632"/>
        <end position="651"/>
    </location>
</feature>
<feature type="region of interest" description="Disordered" evidence="6">
    <location>
        <begin position="1239"/>
        <end position="1941"/>
    </location>
</feature>
<feature type="region of interest" description="Triple-helical region">
    <location>
        <begin position="1254"/>
        <end position="2784"/>
    </location>
</feature>
<feature type="region of interest" description="Interrupted collagenous region">
    <location>
        <begin position="1254"/>
        <end position="1477"/>
    </location>
</feature>
<feature type="region of interest" description="Disordered" evidence="6">
    <location>
        <begin position="1963"/>
        <end position="2782"/>
    </location>
</feature>
<feature type="region of interest" description="Nonhelical region (NC2)">
    <location>
        <begin position="2785"/>
        <end position="2944"/>
    </location>
</feature>
<feature type="region of interest" description="Disordered" evidence="6">
    <location>
        <begin position="2837"/>
        <end position="2872"/>
    </location>
</feature>
<feature type="short sequence motif" description="Cell attachment site" evidence="2">
    <location>
        <begin position="1170"/>
        <end position="1172"/>
    </location>
</feature>
<feature type="short sequence motif" description="Cell attachment site" evidence="2">
    <location>
        <begin position="1334"/>
        <end position="1336"/>
    </location>
</feature>
<feature type="short sequence motif" description="Cell attachment site" evidence="2">
    <location>
        <begin position="2008"/>
        <end position="2010"/>
    </location>
</feature>
<feature type="short sequence motif" description="Cell attachment site" evidence="2">
    <location>
        <begin position="2553"/>
        <end position="2555"/>
    </location>
</feature>
<feature type="compositionally biased region" description="Basic and acidic residues" evidence="6">
    <location>
        <begin position="1336"/>
        <end position="1346"/>
    </location>
</feature>
<feature type="compositionally biased region" description="Gly residues" evidence="6">
    <location>
        <begin position="1355"/>
        <end position="1365"/>
    </location>
</feature>
<feature type="compositionally biased region" description="Basic and acidic residues" evidence="6">
    <location>
        <begin position="1399"/>
        <end position="1408"/>
    </location>
</feature>
<feature type="compositionally biased region" description="Pro residues" evidence="6">
    <location>
        <begin position="1429"/>
        <end position="1440"/>
    </location>
</feature>
<feature type="compositionally biased region" description="Low complexity" evidence="6">
    <location>
        <begin position="1574"/>
        <end position="1583"/>
    </location>
</feature>
<feature type="compositionally biased region" description="Basic and acidic residues" evidence="6">
    <location>
        <begin position="1630"/>
        <end position="1642"/>
    </location>
</feature>
<feature type="compositionally biased region" description="Basic and acidic residues" evidence="6">
    <location>
        <begin position="1669"/>
        <end position="1683"/>
    </location>
</feature>
<feature type="compositionally biased region" description="Basic and acidic residues" evidence="6">
    <location>
        <begin position="1715"/>
        <end position="1733"/>
    </location>
</feature>
<feature type="compositionally biased region" description="Low complexity" evidence="6">
    <location>
        <begin position="1786"/>
        <end position="1802"/>
    </location>
</feature>
<feature type="compositionally biased region" description="Basic and acidic residues" evidence="6">
    <location>
        <begin position="1852"/>
        <end position="1877"/>
    </location>
</feature>
<feature type="compositionally biased region" description="Pro residues" evidence="6">
    <location>
        <begin position="1886"/>
        <end position="1897"/>
    </location>
</feature>
<feature type="compositionally biased region" description="Gly residues" evidence="6">
    <location>
        <begin position="1898"/>
        <end position="1911"/>
    </location>
</feature>
<feature type="compositionally biased region" description="Basic and acidic residues" evidence="6">
    <location>
        <begin position="1974"/>
        <end position="1984"/>
    </location>
</feature>
<feature type="compositionally biased region" description="Gly residues" evidence="6">
    <location>
        <begin position="2046"/>
        <end position="2055"/>
    </location>
</feature>
<feature type="compositionally biased region" description="Basic and acidic residues" evidence="6">
    <location>
        <begin position="2056"/>
        <end position="2074"/>
    </location>
</feature>
<feature type="compositionally biased region" description="Pro residues" evidence="6">
    <location>
        <begin position="2078"/>
        <end position="2092"/>
    </location>
</feature>
<feature type="compositionally biased region" description="Basic and acidic residues" evidence="6">
    <location>
        <begin position="2127"/>
        <end position="2143"/>
    </location>
</feature>
<feature type="compositionally biased region" description="Low complexity" evidence="6">
    <location>
        <begin position="2191"/>
        <end position="2206"/>
    </location>
</feature>
<feature type="compositionally biased region" description="Low complexity" evidence="6">
    <location>
        <begin position="2235"/>
        <end position="2250"/>
    </location>
</feature>
<feature type="compositionally biased region" description="Basic and acidic residues" evidence="6">
    <location>
        <begin position="2328"/>
        <end position="2346"/>
    </location>
</feature>
<feature type="compositionally biased region" description="Low complexity" evidence="6">
    <location>
        <begin position="2387"/>
        <end position="2406"/>
    </location>
</feature>
<feature type="compositionally biased region" description="Pro residues" evidence="6">
    <location>
        <begin position="2438"/>
        <end position="2448"/>
    </location>
</feature>
<feature type="compositionally biased region" description="Basic and acidic residues" evidence="6">
    <location>
        <begin position="2471"/>
        <end position="2486"/>
    </location>
</feature>
<feature type="compositionally biased region" description="Basic and acidic residues" evidence="6">
    <location>
        <begin position="2534"/>
        <end position="2570"/>
    </location>
</feature>
<feature type="compositionally biased region" description="Low complexity" evidence="6">
    <location>
        <begin position="2573"/>
        <end position="2601"/>
    </location>
</feature>
<feature type="compositionally biased region" description="Gly residues" evidence="6">
    <location>
        <begin position="2704"/>
        <end position="2713"/>
    </location>
</feature>
<feature type="compositionally biased region" description="Low complexity" evidence="6">
    <location>
        <begin position="2749"/>
        <end position="2762"/>
    </location>
</feature>
<feature type="compositionally biased region" description="Basic and acidic residues" evidence="6">
    <location>
        <begin position="2837"/>
        <end position="2847"/>
    </location>
</feature>
<feature type="compositionally biased region" description="Acidic residues" evidence="6">
    <location>
        <begin position="2848"/>
        <end position="2872"/>
    </location>
</feature>
<feature type="site" description="Reactive bond" evidence="1">
    <location>
        <begin position="2886"/>
        <end position="2887"/>
    </location>
</feature>
<feature type="modified residue" description="4-hydroxyproline" evidence="26">
    <location>
        <position position="2036"/>
    </location>
</feature>
<feature type="modified residue" description="4-hydroxyproline" evidence="26">
    <location>
        <position position="2039"/>
    </location>
</feature>
<feature type="modified residue" description="4-hydroxyproline" evidence="26">
    <location>
        <position position="2084"/>
    </location>
</feature>
<feature type="modified residue" description="4-hydroxyproline" evidence="26">
    <location>
        <position position="2087"/>
    </location>
</feature>
<feature type="modified residue" description="4-hydroxyproline" evidence="26">
    <location>
        <position position="2090"/>
    </location>
</feature>
<feature type="modified residue" description="4-hydroxyproline" evidence="29">
    <location>
        <position position="2167"/>
    </location>
</feature>
<feature type="modified residue" description="4-hydroxyproline" evidence="29">
    <location>
        <position position="2176"/>
    </location>
</feature>
<feature type="modified residue" description="4-hydroxyproline" evidence="29">
    <location>
        <position position="2185"/>
    </location>
</feature>
<feature type="modified residue" description="4-hydroxyproline" evidence="29">
    <location>
        <position position="2188"/>
    </location>
</feature>
<feature type="modified residue" description="5-hydroxylysine; alternate" evidence="29">
    <location>
        <position position="2625"/>
    </location>
</feature>
<feature type="modified residue" description="5-hydroxylysine; alternate" evidence="29">
    <location>
        <position position="2631"/>
    </location>
</feature>
<feature type="modified residue" description="4-hydroxyproline" evidence="29">
    <location>
        <position position="2664"/>
    </location>
</feature>
<feature type="modified residue" description="4-hydroxyproline" evidence="29">
    <location>
        <position position="2667"/>
    </location>
</feature>
<feature type="modified residue" description="4-hydroxyproline" evidence="29">
    <location>
        <position position="2673"/>
    </location>
</feature>
<feature type="glycosylation site" description="N-linked (GlcNAc...) asparagine" evidence="2">
    <location>
        <position position="337"/>
    </location>
</feature>
<feature type="glycosylation site" description="N-linked (GlcNAc...) asparagine" evidence="2">
    <location>
        <position position="786"/>
    </location>
</feature>
<feature type="glycosylation site" description="N-linked (GlcNAc...) asparagine" evidence="2">
    <location>
        <position position="1109"/>
    </location>
</feature>
<feature type="glycosylation site" description="O-linked (Gal...) hydroxylysine; alternate">
    <location>
        <position position="2625"/>
    </location>
</feature>
<feature type="glycosylation site" description="O-linked (Gal...) hydroxylysine; alternate">
    <location>
        <position position="2631"/>
    </location>
</feature>
<feature type="disulfide bond" description="Interchain" evidence="3">
    <location>
        <position position="2634"/>
    </location>
</feature>
<feature type="disulfide bond" description="Interchain" evidence="3">
    <location>
        <position position="2802"/>
    </location>
</feature>
<feature type="disulfide bond" description="Interchain" evidence="3">
    <location>
        <position position="2804"/>
    </location>
</feature>
<feature type="disulfide bond" evidence="3">
    <location>
        <begin position="2876"/>
        <end position="2929"/>
    </location>
</feature>
<feature type="disulfide bond" evidence="3">
    <location>
        <begin position="2885"/>
        <end position="2912"/>
    </location>
</feature>
<feature type="disulfide bond" evidence="3">
    <location>
        <begin position="2904"/>
        <end position="2925"/>
    </location>
</feature>
<feature type="splice variant" id="VSP_024026" description="In isoform 2." evidence="46">
    <location>
        <begin position="1869"/>
        <end position="1900"/>
    </location>
</feature>
<feature type="sequence variant" id="VAR_035740" description="In a breast cancer sample; somatic mutation." evidence="22">
    <original>T</original>
    <variation>P</variation>
    <location>
        <position position="119"/>
    </location>
</feature>
<feature type="sequence variant" id="VAR_001809" description="In RDEB; uncertain significance; may affect exon 3 splicing; dbSNP:rs121912856." evidence="21">
    <original>K</original>
    <variation>R</variation>
    <location>
        <position position="142"/>
    </location>
</feature>
<feature type="sequence variant" id="VAR_001810" description="In dbSNP:rs2228561.">
    <original>P</original>
    <variation>L</variation>
    <location>
        <position position="595"/>
    </location>
</feature>
<feature type="sequence variant" id="VAR_048766" description="In dbSNP:rs2228563.">
    <original>R</original>
    <variation>K</variation>
    <location>
        <position position="1120"/>
    </location>
</feature>
<feature type="sequence variant" id="VAR_001811" description="In dbSNP:rs35761247.">
    <original>P</original>
    <variation>L</variation>
    <location>
        <position position="1277"/>
    </location>
</feature>
<feature type="sequence variant" id="VAR_011160" description="In RDEB; localized type; mild; dbSNP:rs121912833." evidence="43">
    <original>G</original>
    <variation>R</variation>
    <location>
        <position position="1347"/>
    </location>
</feature>
<feature type="sequence variant" id="VAR_035741" description="In a breast cancer sample; somatic mutation." evidence="22">
    <original>P</original>
    <variation>T</variation>
    <location>
        <position position="1364"/>
    </location>
</feature>
<feature type="sequence variant" id="VAR_035742" description="In a breast cancer sample; somatic mutation; dbSNP:rs147089666." evidence="22">
    <original>R</original>
    <variation>W</variation>
    <location>
        <position position="1366"/>
    </location>
</feature>
<feature type="sequence variant" id="VAR_011161" description="In TBDN; dbSNP:rs121912835." evidence="41 45">
    <original>G</original>
    <variation>D</variation>
    <location>
        <position position="1519"/>
    </location>
</feature>
<feature type="sequence variant" id="VAR_011162" description="In DDEB; dbSNP:rs387906605." evidence="14">
    <original>G</original>
    <variation>E</variation>
    <location>
        <position position="1522"/>
    </location>
</feature>
<feature type="sequence variant" id="VAR_001812" description="In DDEB." evidence="35">
    <original>G</original>
    <variation>R</variation>
    <location>
        <position position="1557"/>
    </location>
</feature>
<feature type="sequence variant" id="VAR_015519" description="In NDNC8; dbSNP:rs121912840." evidence="19">
    <original>G</original>
    <variation>R</variation>
    <location>
        <position position="1595"/>
    </location>
</feature>
<feature type="sequence variant" id="VAR_011163" description="In RDEB; dbSNP:rs1560234201." evidence="14">
    <original>G</original>
    <variation>R</variation>
    <location>
        <position position="1604"/>
    </location>
</feature>
<feature type="sequence variant" id="VAR_011164" description="In RDEB; mitis type; dbSNP:rs1439299333." evidence="40">
    <original>G</original>
    <variation>R</variation>
    <location>
        <position position="1652"/>
    </location>
</feature>
<feature type="sequence variant" id="VAR_011165" description="In RDEB; dbSNP:rs770304825." evidence="14">
    <original>G</original>
    <variation>E</variation>
    <location>
        <position position="1703"/>
    </location>
</feature>
<feature type="sequence variant" id="VAR_011166" description="In RDEB; dbSNP:rs1032335328." evidence="14">
    <original>R</original>
    <variation>W</variation>
    <location>
        <position position="1772"/>
    </location>
</feature>
<feature type="sequence variant" id="VAR_011167" description="In DDEB." evidence="14">
    <original>G</original>
    <variation>R</variation>
    <location>
        <position position="1776"/>
    </location>
</feature>
<feature type="sequence variant" id="VAR_001813" description="In RDEB; mitis type; dbSNP:rs374718902." evidence="34">
    <original>G</original>
    <variation>R</variation>
    <location>
        <position position="1782"/>
    </location>
</feature>
<feature type="sequence variant" id="VAR_011168" description="In EBP; dbSNP:rs1575450640." evidence="12">
    <original>G</original>
    <variation>E</variation>
    <location>
        <position position="1791"/>
    </location>
</feature>
<feature type="sequence variant" id="VAR_011169" description="In RDEB." evidence="15">
    <original>G</original>
    <variation>R</variation>
    <location>
        <position position="1812"/>
    </location>
</feature>
<feature type="sequence variant" id="VAR_015520" description="In NDNC8; dbSNP:rs121912841." evidence="19">
    <original>G</original>
    <variation>R</variation>
    <location>
        <position position="1815"/>
    </location>
</feature>
<feature type="sequence variant" id="VAR_064994" description="In RDEB." evidence="25">
    <original>G</original>
    <variation>R</variation>
    <location>
        <position position="1845"/>
    </location>
</feature>
<feature type="sequence variant" id="VAR_064995" description="In RDEB; mild form." evidence="25">
    <original>K</original>
    <variation>R</variation>
    <location>
        <position position="1981"/>
    </location>
</feature>
<feature type="sequence variant" id="VAR_001814" description="In RDEB." evidence="39">
    <original>G</original>
    <variation>W</variation>
    <location>
        <position position="1982"/>
    </location>
</feature>
<feature type="sequence variant" id="VAR_001815" description="In DDEB; dbSNP:rs121912832." evidence="25">
    <original>G</original>
    <variation>R</variation>
    <location>
        <position position="2003"/>
    </location>
</feature>
<feature type="sequence variant" id="VAR_011170" description="In DDEB." evidence="14">
    <original>G</original>
    <variation>A</variation>
    <location>
        <position position="2006"/>
    </location>
</feature>
<feature type="sequence variant" id="VAR_011171" description="In DDEB; interferes with collagen VII folding and secretion; dbSNP:rs121912842." evidence="7 41">
    <original>G</original>
    <variation>D</variation>
    <location>
        <position position="2006"/>
    </location>
</feature>
<feature type="sequence variant" id="VAR_011172" description="In RDEB; dbSNP:rs1055680335." evidence="7 42">
    <original>R</original>
    <variation>C</variation>
    <location>
        <position position="2008"/>
    </location>
</feature>
<feature type="sequence variant" id="VAR_001816" description="In RDEB; dbSNP:rs1055680335." evidence="7 39">
    <original>R</original>
    <variation>G</variation>
    <location>
        <position position="2008"/>
    </location>
</feature>
<feature type="sequence variant" id="VAR_011173" description="In RDEB." evidence="7 38">
    <original>G</original>
    <variation>R</variation>
    <location>
        <position position="2009"/>
    </location>
</feature>
<feature type="sequence variant" id="VAR_011174" description="In DDEB; interferes with collagen VII folding and secretion; dbSNP:rs121912843." evidence="7 41">
    <original>G</original>
    <variation>E</variation>
    <location>
        <position position="2015"/>
    </location>
</feature>
<feature type="sequence variant" id="VAR_001817" description="In RDEB; mitis type; dbSNP:rs766931219." evidence="39">
    <original>G</original>
    <variation>A</variation>
    <location>
        <position position="2025"/>
    </location>
</feature>
<feature type="sequence variant" id="VAR_011175" description="In DDEB." evidence="17">
    <original>G</original>
    <variation>A</variation>
    <location>
        <position position="2028"/>
    </location>
</feature>
<feature type="sequence variant" id="VAR_011176" description="In DDEB and EBP; dbSNP:rs762162799." evidence="16 17">
    <original>G</original>
    <variation>R</variation>
    <location>
        <position position="2028"/>
    </location>
</feature>
<feature type="sequence variant" id="VAR_011177" description="In RDEB; severe phenotype; dbSNP:rs121912838." evidence="18">
    <original>G</original>
    <variation>S</variation>
    <location>
        <position position="2031"/>
    </location>
</feature>
<feature type="sequence variant" id="VAR_001818" description="In DDEB and EBDSC; interferes with collagen VII folding and secretion; dbSNP:rs121912844." evidence="7 20 27 41">
    <original>G</original>
    <variation>R</variation>
    <location>
        <position position="2034"/>
    </location>
</feature>
<feature type="sequence variant" id="VAR_011178" description="In DDEB." evidence="7 44">
    <original>G</original>
    <variation>W</variation>
    <location>
        <position position="2034"/>
    </location>
</feature>
<feature type="sequence variant" id="VAR_011179" description="In DDEB; dbSNP:rs121912846." evidence="11">
    <original>G</original>
    <variation>E</variation>
    <location>
        <position position="2037"/>
    </location>
</feature>
<feature type="sequence variant" id="VAR_011180" description="In DDEB." evidence="25">
    <original>G</original>
    <variation>D</variation>
    <location>
        <position position="2040"/>
    </location>
</feature>
<feature type="sequence variant" id="VAR_001819" description="In DDEB; dbSNP:rs121912829." evidence="30">
    <original>G</original>
    <variation>S</variation>
    <location>
        <position position="2040"/>
    </location>
</feature>
<feature type="sequence variant" id="VAR_011181" description="In DDEB." evidence="44">
    <original>G</original>
    <variation>V</variation>
    <location>
        <position position="2040"/>
    </location>
</feature>
<feature type="sequence variant" id="VAR_001820" description="In DDEB; dbSNP:rs121912836." evidence="7 25 28 38 44">
    <original>G</original>
    <variation>R</variation>
    <location>
        <position position="2043"/>
    </location>
</feature>
<feature type="sequence variant" id="VAR_011182" description="In DDEB; localized type; dbSNP:rs121912836." evidence="7">
    <original>G</original>
    <variation>W</variation>
    <location>
        <position position="2043"/>
    </location>
</feature>
<feature type="sequence variant" id="VAR_011183" description="In DDEB." evidence="14">
    <original>G</original>
    <variation>V</variation>
    <location>
        <position position="2046"/>
    </location>
</feature>
<feature type="sequence variant" id="VAR_001821" description="In RDEB." evidence="25 39">
    <original>G</original>
    <variation>E</variation>
    <location>
        <position position="2049"/>
    </location>
</feature>
<feature type="sequence variant" id="VAR_001822" description="In DDEB; dbSNP:rs1553854678." evidence="35">
    <original>G</original>
    <variation>E</variation>
    <location>
        <position position="2055"/>
    </location>
</feature>
<feature type="sequence variant" id="VAR_001823" description="In RDEB; dbSNP:rs121912849." evidence="8 25 39">
    <original>R</original>
    <variation>W</variation>
    <location>
        <position position="2063"/>
    </location>
</feature>
<feature type="sequence variant" id="VAR_011184" description="In DDEB; dbSNP:rs866061439." evidence="25 44">
    <original>G</original>
    <variation>R</variation>
    <location>
        <position position="2064"/>
    </location>
</feature>
<feature type="sequence variant" id="VAR_064996" description="In RDEB; dbSNP:rs121912855." evidence="21 25">
    <original>R</original>
    <variation>C</variation>
    <location>
        <position position="2069"/>
    </location>
</feature>
<feature type="sequence variant" id="VAR_064997" description="In DDEB." evidence="25">
    <original>G</original>
    <variation>R</variation>
    <location>
        <position position="2070"/>
    </location>
</feature>
<feature type="sequence variant" id="VAR_001825" description="In RDEB; mitis type." evidence="36">
    <original>G</original>
    <variation>D</variation>
    <location>
        <position position="2073"/>
    </location>
</feature>
<feature type="sequence variant" id="VAR_001826" description="In DDEB; also in recessive forms; dbSNP:rs121912850." evidence="25">
    <original>G</original>
    <variation>D</variation>
    <location>
        <position position="2076"/>
    </location>
</feature>
<feature type="sequence variant" id="VAR_001827" description="In DDEB." evidence="8">
    <original>G</original>
    <variation>E</variation>
    <location>
        <position position="2079"/>
    </location>
</feature>
<feature type="sequence variant" id="VAR_011185" description="In DDEB." evidence="10">
    <original>G</original>
    <variation>R</variation>
    <location>
        <position position="2079"/>
    </location>
</feature>
<feature type="sequence variant" id="VAR_011186" description="In RDEB; dbSNP:rs755669902." evidence="14">
    <original>G</original>
    <variation>D</variation>
    <location>
        <position position="2132"/>
    </location>
</feature>
<feature type="sequence variant" id="VAR_011187" description="In RDEB." evidence="14">
    <original>G</original>
    <variation>S</variation>
    <location>
        <position position="2192"/>
    </location>
</feature>
<feature type="sequence variant" id="VAR_011188" description="In DDEB." evidence="42">
    <original>G</original>
    <variation>R</variation>
    <location>
        <position position="2207"/>
    </location>
</feature>
<feature type="sequence variant" id="VAR_064998" description="In RDEB." evidence="24">
    <original>G</original>
    <variation>A</variation>
    <location>
        <position position="2221"/>
    </location>
</feature>
<feature type="sequence variant" id="VAR_001828" description="In EBP; dbSNP:rs121912837." evidence="12">
    <original>G</original>
    <variation>R</variation>
    <location>
        <position position="2242"/>
    </location>
</feature>
<feature type="sequence variant" id="VAR_011189" description="In TBDN; also found in isolated toenail dystrophy; dbSNP:rs121912834." evidence="45">
    <original>G</original>
    <variation>E</variation>
    <location>
        <position position="2251"/>
    </location>
</feature>
<feature type="sequence variant" id="VAR_011190" description="In RDEB." evidence="14">
    <original>G</original>
    <variation>V</variation>
    <location>
        <position position="2263"/>
    </location>
</feature>
<feature type="sequence variant" id="VAR_011191" description="In RDEB; also found in isolated toenail dystrophy; dbSNP:rs121912839." evidence="13">
    <original>G</original>
    <variation>R</variation>
    <location>
        <position position="2287"/>
    </location>
</feature>
<feature type="sequence variant" id="VAR_064999" description="In RDEB." evidence="25">
    <original>G</original>
    <variation>E</variation>
    <location>
        <position position="2296"/>
    </location>
</feature>
<feature type="sequence variant" id="VAR_011192" description="In RDEB." evidence="13">
    <original>G</original>
    <variation>R</variation>
    <location>
        <position position="2316"/>
    </location>
</feature>
<feature type="sequence variant" id="VAR_011193" description="In DDEB/RDEB; mild form." evidence="9">
    <original>G</original>
    <variation>R</variation>
    <location>
        <position position="2348"/>
    </location>
</feature>
<feature type="sequence variant" id="VAR_001829" description="In a patient with dystrophic epidermolysis bullosa; mitis type; dbSNP:rs1800013." evidence="14">
    <original>G</original>
    <variation>R</variation>
    <location>
        <position position="2351"/>
    </location>
</feature>
<feature type="sequence variant" id="VAR_011194" description="In RDEB; mitis type; dbSNP:rs1560204600." evidence="8">
    <original>G</original>
    <variation>S</variation>
    <location>
        <position position="2366"/>
    </location>
</feature>
<feature type="sequence variant" id="VAR_011195" description="In EBP." evidence="12">
    <original>G</original>
    <variation>S</variation>
    <location>
        <position position="2369"/>
    </location>
</feature>
<feature type="sequence variant" id="VAR_033786" description="In dbSNP:rs2229822.">
    <original>P</original>
    <variation>L</variation>
    <location>
        <position position="2429"/>
    </location>
</feature>
<feature type="sequence variant" id="VAR_065000" description="In RDEB." evidence="25">
    <original>G</original>
    <variation>R</variation>
    <location>
        <position position="2557"/>
    </location>
</feature>
<feature type="sequence variant" id="VAR_001830" description="In RDEB; severe and mitis type." evidence="35">
    <original>G</original>
    <variation>R</variation>
    <location>
        <position position="2569"/>
    </location>
</feature>
<feature type="sequence variant" id="VAR_001831" description="In RDEB; dbSNP:rs760891216." evidence="33 39">
    <original>G</original>
    <variation>R</variation>
    <location>
        <position position="2575"/>
    </location>
</feature>
<feature type="sequence variant" id="VAR_065001" description="In RDEB; dbSNP:rs139318843." evidence="25">
    <original>R</original>
    <variation>W</variation>
    <location>
        <position position="2622"/>
    </location>
</feature>
<feature type="sequence variant" id="VAR_001832" description="In PR-DEB; dominant; dbSNP:rs121912831." evidence="32">
    <original>G</original>
    <variation>C</variation>
    <location>
        <position position="2623"/>
    </location>
</feature>
<feature type="sequence variant" id="VAR_001833" description="In RDEB; mitis type; dbSNP:rs121912851." evidence="35">
    <original>G</original>
    <variation>R</variation>
    <location>
        <position position="2653"/>
    </location>
</feature>
<feature type="sequence variant" id="VAR_001834" description="In RDEB." evidence="37">
    <original>G</original>
    <variation>V</variation>
    <location>
        <position position="2671"/>
    </location>
</feature>
<feature type="sequence variant" id="VAR_011196" description="In RDEB." evidence="14">
    <original>G</original>
    <variation>D</variation>
    <location>
        <position position="2674"/>
    </location>
</feature>
<feature type="sequence variant" id="VAR_001835" description="In RDEB; mitis type." evidence="35">
    <original>G</original>
    <variation>R</variation>
    <location>
        <position position="2674"/>
    </location>
</feature>
<feature type="sequence variant" id="VAR_011197" description="In DDEB; dbSNP:rs369591910." evidence="44">
    <original>G</original>
    <variation>D</variation>
    <location>
        <position position="2713"/>
    </location>
</feature>
<feature type="sequence variant" id="VAR_011198" description="In EBP." evidence="12">
    <original>G</original>
    <variation>R</variation>
    <location>
        <position position="2713"/>
    </location>
</feature>
<feature type="sequence variant" id="VAR_011199" description="In RDEB." evidence="14">
    <original>G</original>
    <variation>A</variation>
    <location>
        <position position="2740"/>
    </location>
</feature>
<feature type="sequence variant" id="VAR_001836" description="In RDEB; dbSNP:rs121912853." evidence="35">
    <original>G</original>
    <variation>R</variation>
    <location>
        <position position="2749"/>
    </location>
</feature>
<feature type="sequence variant" id="VAR_011200" description="In RDEB; mitis type; dbSNP:rs1333259313." evidence="42">
    <original>G</original>
    <variation>S</variation>
    <location>
        <position position="2775"/>
    </location>
</feature>
<feature type="sequence variant" id="VAR_011201" description="In DDEB; dbSNP:rs142566193." evidence="14">
    <original>R</original>
    <variation>W</variation>
    <location>
        <position position="2791"/>
    </location>
</feature>
<feature type="sequence variant" id="VAR_001837" description="In RDEB; dbSNP:rs121912828." evidence="31">
    <original>M</original>
    <variation>K</variation>
    <location>
        <position position="2798"/>
    </location>
</feature>
<feature type="sequence conflict" description="In Ref. 4; BAA02853." evidence="46" ref="4">
    <original>FFF</original>
    <variation>EFR</variation>
    <location>
        <begin position="195"/>
        <end position="197"/>
    </location>
</feature>
<feature type="sequence conflict" description="In Ref. 5; AAA36357/AAB24637." evidence="46" ref="5">
    <original>QQQ</original>
    <variation>EFR</variation>
    <location>
        <begin position="369"/>
        <end position="371"/>
    </location>
</feature>
<feature type="sequence conflict" description="In Ref. 5; AAA36357/AAB24637." evidence="46" ref="5">
    <original>EL</original>
    <variation>DV</variation>
    <location>
        <begin position="518"/>
        <end position="519"/>
    </location>
</feature>
<feature type="sequence conflict" description="In Ref. 4; BAA02853." evidence="46" ref="4">
    <original>S</original>
    <variation>C</variation>
    <location>
        <position position="529"/>
    </location>
</feature>
<feature type="sequence conflict" description="In Ref. 5; AAA36357/AAB24637." evidence="46" ref="5">
    <original>V</original>
    <variation>W</variation>
    <location>
        <position position="541"/>
    </location>
</feature>
<feature type="sequence conflict" description="In Ref. 4; BAA02853." evidence="46" ref="4">
    <original>R</original>
    <variation>H</variation>
    <location>
        <position position="851"/>
    </location>
</feature>
<feature type="sequence conflict" description="In Ref. 1; AAA58965, 4; BAA02853 and 6; AAA96439." evidence="46" ref="1 4 6">
    <original>A</original>
    <variation>E</variation>
    <location>
        <position position="893"/>
    </location>
</feature>
<feature type="sequence conflict" description="In Ref. 4; BAA02853." evidence="46" ref="4">
    <original>R</original>
    <variation>L</variation>
    <location>
        <position position="1122"/>
    </location>
</feature>
<feature type="sequence conflict" description="In Ref. 3; AA sequence." evidence="46" ref="3">
    <original>SP</original>
    <variation>LR</variation>
    <location>
        <begin position="1463"/>
        <end position="1464"/>
    </location>
</feature>
<organism>
    <name type="scientific">Homo sapiens</name>
    <name type="common">Human</name>
    <dbReference type="NCBI Taxonomy" id="9606"/>
    <lineage>
        <taxon>Eukaryota</taxon>
        <taxon>Metazoa</taxon>
        <taxon>Chordata</taxon>
        <taxon>Craniata</taxon>
        <taxon>Vertebrata</taxon>
        <taxon>Euteleostomi</taxon>
        <taxon>Mammalia</taxon>
        <taxon>Eutheria</taxon>
        <taxon>Euarchontoglires</taxon>
        <taxon>Primates</taxon>
        <taxon>Haplorrhini</taxon>
        <taxon>Catarrhini</taxon>
        <taxon>Hominidae</taxon>
        <taxon>Homo</taxon>
    </lineage>
</organism>
<keyword id="KW-0025">Alternative splicing</keyword>
<keyword id="KW-0084">Basement membrane</keyword>
<keyword id="KW-0130">Cell adhesion</keyword>
<keyword id="KW-0176">Collagen</keyword>
<keyword id="KW-0903">Direct protein sequencing</keyword>
<keyword id="KW-0225">Disease variant</keyword>
<keyword id="KW-1015">Disulfide bond</keyword>
<keyword id="KW-0263">Epidermolysis bullosa</keyword>
<keyword id="KW-0272">Extracellular matrix</keyword>
<keyword id="KW-0325">Glycoprotein</keyword>
<keyword id="KW-0379">Hydroxylation</keyword>
<keyword id="KW-0646">Protease inhibitor</keyword>
<keyword id="KW-1267">Proteomics identification</keyword>
<keyword id="KW-1185">Reference proteome</keyword>
<keyword id="KW-0677">Repeat</keyword>
<keyword id="KW-0964">Secreted</keyword>
<keyword id="KW-0722">Serine protease inhibitor</keyword>
<keyword id="KW-0732">Signal</keyword>
<reference key="1">
    <citation type="journal article" date="1994" name="Genomics">
        <title>Structural organization of the human type VII collagen gene (COL7A1), composed of more exons than any previously characterized gene.</title>
        <authorList>
            <person name="Christiano A.M."/>
            <person name="Hoffman G.G."/>
            <person name="Chung-Honet L.C."/>
            <person name="Lee S."/>
            <person name="Cheng W."/>
            <person name="Uitto J."/>
            <person name="Greenspan D.S."/>
        </authorList>
    </citation>
    <scope>NUCLEOTIDE SEQUENCE [GENOMIC DNA] (ISOFORM 2)</scope>
    <source>
        <tissue>Placenta</tissue>
    </source>
</reference>
<reference key="2">
    <citation type="journal article" date="1994" name="J. Biol. Chem.">
        <title>Cloning of human type VII collagen. Complete primary sequence of the alpha 1(VII) chain and identification of intragenic polymorphisms.</title>
        <authorList>
            <person name="Christiano A.M."/>
            <person name="Greenspan D.S."/>
            <person name="Lee S."/>
            <person name="Uitto J."/>
        </authorList>
    </citation>
    <scope>NUCLEOTIDE SEQUENCE [MRNA] (ISOFORM 1)</scope>
    <scope>HYDROXYLATION AT PRO-2167; PRO-2176; PRO-2185; PRO-2188; LYS-2625; LYS-2631; PRO-2664; PRO-2667 AND PRO-2673</scope>
</reference>
<reference key="3">
    <citation type="journal article" date="1992" name="Hum. Mol. Genet.">
        <title>The large non-collagenous domain (NC-1) of type VII collagen is amino-terminal and chimeric. Homology to cartilage matrix protein, the type III domains of fibronectin and the A domains of von Willebrand factor.</title>
        <authorList>
            <person name="Christiano A.M."/>
            <person name="Rosenbaum L.M."/>
            <person name="Chung-Honet L.C."/>
            <person name="Parente M.G."/>
            <person name="Woodley D.T."/>
            <person name="Pan T.C."/>
            <person name="Zhang R.Z."/>
            <person name="Chu M.-L."/>
            <person name="Burgeson R.E."/>
            <person name="Uitto J."/>
        </authorList>
    </citation>
    <scope>NUCLEOTIDE SEQUENCE [MRNA] OF 128-1493</scope>
    <scope>PARTIAL PROTEIN SEQUENCE</scope>
</reference>
<reference key="4">
    <citation type="journal article" date="1992" name="Biochem. Biophys. Res. Commun.">
        <title>Molecular cloning and characterization of type VII collagen cDNA.</title>
        <authorList>
            <person name="Tanaka T."/>
            <person name="Takahashi K."/>
            <person name="Furukawa F."/>
            <person name="Imamura S."/>
        </authorList>
    </citation>
    <scope>NUCLEOTIDE SEQUENCE [MRNA] OF 195-1275</scope>
    <source>
        <tissue>Keratinocyte</tissue>
    </source>
</reference>
<reference key="5">
    <citation type="journal article" date="1992" name="J. Invest. Dermatol.">
        <title>Noncollagenous (NC1) domain of collagen VII resembles multidomain adhesion proteins involved in tissue-specific organization of extracellular matrix.</title>
        <authorList>
            <person name="Gammon W.R."/>
            <person name="Abernethy M.L."/>
            <person name="Padilla K.M."/>
            <person name="Prisayanh P.S."/>
            <person name="Cook M.E."/>
            <person name="Wright J."/>
            <person name="Briggaman R.A."/>
            <person name="Hunt S.W. III"/>
        </authorList>
    </citation>
    <scope>NUCLEOTIDE SEQUENCE [MRNA] OF 369-1255</scope>
</reference>
<reference key="6">
    <citation type="journal article" date="1991" name="Proc. Natl. Acad. Sci. U.S.A.">
        <title>Human type VII collagen: cDNA cloning and chromosomal mapping of the gene.</title>
        <authorList>
            <person name="Parente M.G."/>
            <person name="Chung L.C."/>
            <person name="Ryynaenen J."/>
            <person name="Woodley D.T."/>
            <person name="Wynn K.W."/>
            <person name="Bauer E.A."/>
            <person name="Mattei M.-G."/>
            <person name="Chu M.-L."/>
            <person name="Uitto J."/>
        </authorList>
    </citation>
    <scope>NUCLEOTIDE SEQUENCE [MRNA] OF 815-1439</scope>
</reference>
<reference key="7">
    <citation type="journal article" date="1993" name="Hum. Mol. Genet.">
        <title>The carboxyl-terminal half of type VII collagen, including the non-collagenous NC-2 domain and intron/exon organization of the corresponding region of the COL7A1 gene.</title>
        <authorList>
            <person name="Greenspan D.S."/>
        </authorList>
    </citation>
    <scope>NUCLEOTIDE SEQUENCE [MRNA] OF 2395-2944</scope>
</reference>
<reference key="8">
    <citation type="journal article" date="1989" name="J. Biol. Chem.">
        <title>Cleavage of type VII collagen by interstitial collagenase and type IV collagenase (gelatinase) derived from human skin.</title>
        <authorList>
            <person name="Seltzer J.L."/>
            <person name="Eisen A.Z."/>
            <person name="Bauer E.A."/>
            <person name="Morris N.P."/>
            <person name="Glanville R.W."/>
            <person name="Burgeson R.E."/>
        </authorList>
    </citation>
    <scope>PARTIAL PROTEIN SEQUENCE</scope>
    <scope>HYDROXYLATION AT PRO-2036; PRO-2039; PRO-2084; PRO-2087 AND PRO-2090</scope>
</reference>
<reference key="9">
    <citation type="journal article" date="2009" name="Cell">
        <title>TANGO1 facilitates cargo loading at endoplasmic reticulum exit sites.</title>
        <authorList>
            <person name="Saito K."/>
            <person name="Chen M."/>
            <person name="Bard F."/>
            <person name="Chen S."/>
            <person name="Zhou H."/>
            <person name="Woodley D."/>
            <person name="Polischuk R."/>
            <person name="Schekman R."/>
            <person name="Malhotra V."/>
        </authorList>
    </citation>
    <scope>INTERACTION WITH MIA3</scope>
</reference>
<reference key="10">
    <citation type="journal article" date="1997" name="Hum. Mutat.">
        <title>Molecular basis of dystrophic epidermolysis bullosa: mutations in the type VII collagen gene (COL7A1).</title>
        <authorList>
            <person name="Jaervikallio A."/>
            <person name="Pulkkinen L."/>
            <person name="Uitto J."/>
        </authorList>
    </citation>
    <scope>REVIEW ON VARIANTS</scope>
</reference>
<reference key="11">
    <citation type="journal article" date="2011" name="BMC Syst. Biol.">
        <title>Initial characterization of the human central proteome.</title>
        <authorList>
            <person name="Burkard T.R."/>
            <person name="Planyavsky M."/>
            <person name="Kaupe I."/>
            <person name="Breitwieser F.P."/>
            <person name="Buerckstuemmer T."/>
            <person name="Bennett K.L."/>
            <person name="Superti-Furga G."/>
            <person name="Colinge J."/>
        </authorList>
    </citation>
    <scope>IDENTIFICATION BY MASS SPECTROMETRY [LARGE SCALE ANALYSIS]</scope>
</reference>
<reference key="12">
    <citation type="journal article" date="1989" name="Arch. Dermatol.">
        <title>Epidermolysis bullosa simplex superficialis. A new variant of epidermolysis bullosa characterized by subcorneal skin cleavage mimicking peeling skin syndrome.</title>
        <authorList>
            <person name="Fine J.-D."/>
            <person name="Johnson L."/>
            <person name="Wright T."/>
        </authorList>
    </citation>
    <scope>VARIANT EBDSC ARG-2034</scope>
</reference>
<reference key="13">
    <citation type="journal article" date="1993" name="Nat. Genet.">
        <title>A missense mutation in type VII collagen in two affected siblings with recessive dystrophic epidermolysis bullosa.</title>
        <authorList>
            <person name="Christiano A.M."/>
            <person name="Greenspan D.S."/>
            <person name="Hoffman G.G."/>
            <person name="Zhang X."/>
            <person name="Tamai Y."/>
            <person name="Lin A.N."/>
            <person name="Dietz H.C."/>
            <person name="Hovnanian A."/>
            <person name="Uitto J."/>
        </authorList>
    </citation>
    <scope>VARIANT RDEB LYS-2798</scope>
</reference>
<reference key="14">
    <citation type="journal article" date="1994" name="Proc. Natl. Acad. Sci. U.S.A.">
        <title>Dominant dystrophic epidermolysis bullosa: identification of a Gly--&gt;Ser substitution in the triple-helical domain of type VII collagen.</title>
        <authorList>
            <person name="Christiano A.M."/>
            <person name="Ryynaenen M."/>
            <person name="Uitto J."/>
        </authorList>
    </citation>
    <scope>VARIANT DDEB SER-2040</scope>
</reference>
<reference key="15">
    <citation type="journal article" date="1995" name="Hum. Mol. Genet.">
        <title>Pretibial epidermolysis bullosa: genetic linkage to COL7A1 and identification of a glycine-to-cysteine substitution in the triple-helical domain of type VII collagen.</title>
        <authorList>
            <person name="Christiano A.M."/>
            <person name="Lee J.Y.-Y."/>
            <person name="Chen W.J."/>
            <person name="Laforgia S."/>
            <person name="Uitto J."/>
        </authorList>
    </citation>
    <scope>VARIANT PR-DEB CYS-2623</scope>
</reference>
<reference key="16">
    <citation type="journal article" date="1995" name="J. Invest. Dermatol.">
        <title>A glycine-to-arginine substitution in the triple-helical domain of type VII collagen in a family with dominant dystrophic epidermolysis bullosa.</title>
        <authorList>
            <person name="Christiano A.M."/>
            <person name="Morricone A."/>
            <person name="Paradisi M."/>
            <person name="Angelo C."/>
            <person name="Mazzanti C."/>
            <person name="Cavalieri R."/>
            <person name="Uitto J."/>
        </authorList>
    </citation>
    <scope>VARIANT DDEB ARG-2043</scope>
</reference>
<reference key="17">
    <citation type="journal article" date="1996" name="Am. J. Hum. Genet.">
        <title>Glycine substitutions in the triple-helical region of type VII collagen result in a spectrum of dystrophic epidermolysis bullosa phenotypes and patterns of inheritance.</title>
        <authorList>
            <person name="Christiano A.M."/>
            <person name="McGrath J.A."/>
            <person name="Tan K.C."/>
            <person name="Uitto J."/>
        </authorList>
    </citation>
    <scope>VARIANTS DDEB ARG-1557; ARG-1776 AND GLU-2055</scope>
    <scope>VARIANTS RDEB ARG-2569; ARG-2653; ARG-2674 AND ARG-2749</scope>
</reference>
<reference key="18">
    <citation type="journal article" date="1996" name="J. Invest. Dermatol.">
        <title>Molecular basis of recessive dystrophic epidermolysis bullosa: genotype/phenotype correlation in a case of moderate clinical severity.</title>
        <authorList>
            <person name="Shimizu H."/>
            <person name="McGrath J.A."/>
            <person name="Christiano A.M."/>
            <person name="Nishikawa T."/>
            <person name="Uitto J."/>
        </authorList>
    </citation>
    <scope>VARIANT RDEB ARG-2575</scope>
</reference>
<reference key="19">
    <citation type="journal article" date="1996" name="J. Invest. Dermatol.">
        <title>Influence of the second COL7A1 mutation in determining the phenotypic severity of recessive dystrophic epidermolysis bullosa.</title>
        <authorList>
            <person name="Christiano A.M."/>
            <person name="McGrath J.A."/>
            <person name="Uitto J."/>
        </authorList>
    </citation>
    <scope>VARIANT RDEB ARG-1782</scope>
</reference>
<reference key="20">
    <citation type="journal article" date="1996" name="J. Invest. Dermatol.">
        <title>Clinicopathological correlations of compound heterozygous COL7A1 mutations in recessive dystrophic epidermolysis bullosa.</title>
        <authorList>
            <person name="Dunnill M.G.S."/>
            <person name="McGrath J.A."/>
            <person name="Richards A.J."/>
            <person name="Christiano A.M."/>
            <person name="Uitto J."/>
            <person name="Pope F.M."/>
            <person name="Eady R.A.J."/>
        </authorList>
    </citation>
    <scope>VARIANT RDEB ASP-2073</scope>
</reference>
<reference key="21">
    <citation type="journal article" date="1997" name="Am. J. Hum. Genet.">
        <title>Characterization of 18 new mutations in COL7A1 in recessive dystrophic epidermolysis bullosa provides evidence for distinct molecular mechanisms underlying defective anchoring fibril formation.</title>
        <authorList>
            <person name="Hovnanian A."/>
            <person name="Rochat A."/>
            <person name="Bodemer C."/>
            <person name="Petit E."/>
            <person name="Rivers C.A."/>
            <person name="Prost C."/>
            <person name="Fraitag S."/>
            <person name="Christiano A.M."/>
            <person name="Uitto J."/>
            <person name="Lathrop M."/>
            <person name="Barrandon Y."/>
            <person name="de Prost Y."/>
        </authorList>
    </citation>
    <scope>VARIANTS RDEB TRP-1982; GLY-2008; ALA-2025; GLU-2049; TRP-2063 AND ARG-2575</scope>
</reference>
<reference key="22">
    <citation type="journal article" date="1997" name="Arch. Dermatol. Res.">
        <title>Identification of a glycine substitution and a splice site mutation in the type VII collagen gene in a proband with mitis recessive dystrophic epidermolysis bullosa.</title>
        <authorList>
            <person name="Cserhalmi-Friedman P.B."/>
            <person name="Karpati S."/>
            <person name="Horvath A."/>
            <person name="Christiano A.M."/>
        </authorList>
    </citation>
    <scope>VARIANT RDEB ARG-1652</scope>
</reference>
<reference key="23">
    <citation type="journal article" date="1997" name="Hum. Mol. Genet.">
        <title>Modulation of disease severity of dystrophic epidermolysis bullosa by a splice site mutation in combination with a missense mutation in the COL7A1 gene.</title>
        <authorList>
            <person name="Winberg J.-O."/>
            <person name="Hammami-Hauasli N."/>
            <person name="Nilssen O."/>
            <person name="Anton-Lamprecht I."/>
            <person name="Naylor S.L."/>
            <person name="Kerbacher K."/>
            <person name="Zimmermann M."/>
            <person name="Krajci P."/>
            <person name="Gedde-Dahl T. Jr."/>
            <person name="Bruckner-Tuderman L."/>
        </authorList>
    </citation>
    <scope>VARIANT RDEB ARG-2009</scope>
    <scope>VARIANT DDEB ARG-2043</scope>
</reference>
<reference key="24">
    <citation type="journal article" date="1997" name="J. Invest. Dermatol.">
        <title>Glycine substitution mutations in the type VII collagen gene (COL7A1) in dystrophic epidermolysis bullosa: implications for genetic counseling.</title>
        <authorList>
            <person name="Kon A."/>
            <person name="McGrath J.A."/>
            <person name="Pulkkinen L."/>
            <person name="Nomura K."/>
            <person name="Nakamura T."/>
            <person name="Maekawa Y."/>
            <person name="Christiano A.M."/>
            <person name="Hashimoto I."/>
            <person name="Uitto J."/>
        </authorList>
    </citation>
    <scope>VARIANT RDEB VAL-2671</scope>
</reference>
<reference key="25">
    <citation type="journal article" date="1998" name="J. Biol. Chem.">
        <title>Some, but not all, glycine substitution mutations in COL7A1 result in intracellular accumulation of collagen VII, loss of anchoring fibrils, and skin blistering.</title>
        <authorList>
            <person name="Hammami-Hauasli N."/>
            <person name="Schumann H."/>
            <person name="Raghunath M."/>
            <person name="Kilgus O."/>
            <person name="Luethi U."/>
            <person name="Luger T."/>
            <person name="Bruckner-Tuderman L."/>
        </authorList>
    </citation>
    <scope>VARIANTS DDEB ASP-1519; ASP-2006; GLU-2015 AND ARG-2034</scope>
</reference>
<reference key="26">
    <citation type="journal article" date="1998" name="J. Invest. Dermatol.">
        <title>Novel COL7A1 mutations in dystrophic forms of epidermolysis bullosa.</title>
        <authorList>
            <person name="Kon A."/>
            <person name="Pulkkinen L."/>
            <person name="Ishida-Yamamoto A."/>
            <person name="Hashimoto I."/>
            <person name="Uitto J."/>
        </authorList>
    </citation>
    <scope>VARIANT DDEB ARG-2207</scope>
    <scope>VARIANTS RDEB CYS-2008 AND SER-2775</scope>
</reference>
<reference key="27">
    <citation type="journal article" date="1998" name="J. Invest. Dermatol.">
        <title>Compound heterozygosity for a recessive glycine substitution and a splice site mutation in the COL7A1 gene causes an unusually mild form of localized recessive dystrophic epidermolysis bullosa.</title>
        <authorList>
            <person name="Terracina M."/>
            <person name="Posteraro P."/>
            <person name="Schubert M."/>
            <person name="Sonego G."/>
            <person name="Atzori F."/>
            <person name="Zambruno G."/>
            <person name="Bruckner-Tuderman L."/>
            <person name="Castiglia D."/>
        </authorList>
    </citation>
    <scope>VARIANT RDEB ARG-1347</scope>
</reference>
<reference key="28">
    <citation type="journal article" date="1998" name="J. Invest. Dermatol.">
        <title>Novel and de novo glycine substitution mutations in the type VII collagen gene (COL7A1) in dystrophic epidermolysis bullosa: implications for genetic counseling.</title>
        <authorList>
            <person name="Rouan F."/>
            <person name="Pulkkinen L."/>
            <person name="Jonkman M.F."/>
            <person name="Bauer J.W."/>
            <person name="Cserhalmi-Friedman P.B."/>
            <person name="Christiano A.M."/>
            <person name="Uitto J."/>
        </authorList>
    </citation>
    <scope>VARIANTS DDEB TRP-2034; VAL-2040; ARG-2043; ARG-2064 AND ASP-2713</scope>
</reference>
<reference key="29">
    <citation type="journal article" date="1998" name="J. Invest. Dermatol.">
        <title>Transient bullous dermolysis of the newborn associated with compound heterozygosity for recessive and dominant COL7A1 mutations.</title>
        <authorList>
            <person name="Hammami-Hauasli N."/>
            <person name="Raghunath M."/>
            <person name="Kuester W."/>
            <person name="Bruckner-Tuderman L."/>
        </authorList>
    </citation>
    <scope>VARIANTS TBDN ASP-1519 AND GLU-2251</scope>
</reference>
<reference key="30">
    <citation type="journal article" date="1999" name="Exp. Dermatol.">
        <title>Diagnostic dilemma of 'sporadic' cases of dystrophic epidermolysis bullosa: a new dominant or mitis recessive mutation?</title>
        <authorList>
            <person name="Hashimoto I."/>
            <person name="Kon A."/>
            <person name="Tamai K."/>
            <person name="Uitto J."/>
        </authorList>
    </citation>
    <scope>VARIANTS DDEB/RDEB TRP-2063 AND SER-2366</scope>
    <scope>VARIANT DDEB GLU-2079</scope>
</reference>
<reference key="31">
    <citation type="journal article" date="1999" name="Exp. Dermatol.">
        <title>Identification of a de novo glycine substitution in the type VII collagen gene in a proband with mild dystrophic epidermolysis bullosa.</title>
        <authorList>
            <person name="Cserhalmi-Friedman P.B."/>
            <person name="Grossman J."/>
            <person name="Karpati S."/>
            <person name="Ahmad W."/>
            <person name="Horvath A."/>
            <person name="Christiano A.M."/>
        </authorList>
    </citation>
    <scope>VARIANT DDEB/RDEB ARG-2348</scope>
</reference>
<reference key="32">
    <citation type="journal article" date="1999" name="Exp. Dermatol.">
        <title>Squamous cell carcinoma in a family with dominant dystrophic epidermolysis bullosa: a molecular genetic study.</title>
        <authorList>
            <person name="Christiano A.M."/>
            <person name="Crollick J."/>
            <person name="Pincus S."/>
            <person name="Uitto J."/>
        </authorList>
    </citation>
    <scope>VARIANT DDEB ARG-2079</scope>
</reference>
<reference key="33">
    <citation type="journal article" date="1999" name="J. Invest. Dermatol.">
        <title>Clustering of COL7A1 mutations in exon 73: implications for mutation analysis in dystrophic epidermolysis bullosa.</title>
        <authorList>
            <person name="Mecklenbeck S."/>
            <person name="Hammami-Hauasli N."/>
            <person name="Hoepfner B."/>
            <person name="Schumann H."/>
            <person name="Kramer A."/>
            <person name="Kuester W."/>
            <person name="Bruckner-Tuderman L."/>
        </authorList>
    </citation>
    <scope>VARIANTS DDEB ASP-2006; GLU-2015; ARG-2034; TRP-2034; ARG-2043 AND TRP-2043</scope>
    <scope>VARIANTS RDEB CYS-2008; GLY-2008 AND ARG-2009</scope>
</reference>
<reference key="34">
    <citation type="journal article" date="1999" name="J. Invest. Dermatol.">
        <title>Dominant dystrophic epidermolysis bullosa (Pasini) caused by a novel glycine substitution mutation in the type VII collagen gene (COL7A1).</title>
        <authorList>
            <person name="Jonkman M.F."/>
            <person name="Moreno G."/>
            <person name="Rouan F."/>
            <person name="Oranje A.P."/>
            <person name="Pulkkinen L."/>
            <person name="Uitto J."/>
        </authorList>
    </citation>
    <scope>VARIANT DDEB GLU-2037</scope>
</reference>
<reference key="35">
    <citation type="journal article" date="1999" name="J. Invest. Dermatol.">
        <title>Allelic heterogeneity of dominant and recessive COL7A1 mutations underlying epidermolysis bullosa pruriginosa.</title>
        <authorList>
            <person name="Mellerio J.E."/>
            <person name="Ashton G.H.S."/>
            <person name="Mohammedi R."/>
            <person name="Lyon C.C."/>
            <person name="Kirby B."/>
            <person name="Harman K.E."/>
            <person name="Salas-Alanis J.C."/>
            <person name="Atherton D.J."/>
            <person name="Harrison P.V."/>
            <person name="Griffiths W.A.D."/>
            <person name="Black M.M."/>
            <person name="Eady R.A.J."/>
            <person name="McGrath J.A."/>
        </authorList>
    </citation>
    <scope>VARIANTS EBP GLU-1791; ARG-2242; SER-2369 AND ARG-2713</scope>
</reference>
<reference key="36">
    <citation type="journal article" date="1999" name="J. Invest. Dermatol.">
        <title>Compound heterozygosity for silent and dominant glycine substitution mutations in COL7A1 leads to a marked transient intracytoplasmic retention of procollagen VII and a moderately severe dystrophic epidermolysis bullosa phenotype.</title>
        <authorList>
            <person name="Shimizu H."/>
            <person name="Hammami-Hauasli N."/>
            <person name="Hatta N."/>
            <person name="Nishikawa T."/>
            <person name="Bruckner-Tuderman L."/>
        </authorList>
    </citation>
    <scope>VARIANTS RDEB ARG-2287 AND ARG-2316</scope>
</reference>
<reference key="37">
    <citation type="journal article" date="1999" name="J. Invest. Dermatol.">
        <title>Comparative mutation detection screening of the type VII collagen gene (COL7A1) using the protein truncation test, fluorescent chemical cleavage of mismatch, and conformation sensitive gel electrophoresis.</title>
        <authorList>
            <person name="Whittock N.V."/>
            <person name="Ashton G.H.S."/>
            <person name="Mohammedi R."/>
            <person name="Mellerio J.E."/>
            <person name="Mathew C.G."/>
            <person name="Abbs S.J."/>
            <person name="Eady R.A.J."/>
            <person name="McGrath J.A."/>
        </authorList>
    </citation>
    <scope>VARIANTS DDEB GLU-1522; ARG-1776; ALA-2006; VAL-2046 AND TRP-2791</scope>
    <scope>VARIANTS RDEB ARG-1604; GLU-1703; TRP-1772; ASP-2132; SER-2192; VAL-2263; ASP-2674 AND ALA-2740</scope>
    <scope>VARIANT ARG-2351</scope>
</reference>
<reference key="38">
    <citation type="journal article" date="2000" name="Arch. Dermatol. Res.">
        <title>A de novo glycine substitution mutation in the collagenous domain of COL7A1 in dominant dystrophic epidermolysis bullosa.</title>
        <authorList>
            <person name="Lee J.Y.-Y."/>
            <person name="Li C."/>
            <person name="Chao S.-C."/>
            <person name="Pulkkinen L."/>
            <person name="Uitto J."/>
        </authorList>
    </citation>
    <scope>VARIANT DDEB ARG-2028</scope>
</reference>
<reference key="39">
    <citation type="journal article" date="2000" name="Arch. Dermatol. Res.">
        <title>Glycine substitution mutations by different amino acids in the same codon of COL7A1 lead to heterogeneous clinical phenotypes of dominant dystrophic epidermolysis bullosa.</title>
        <authorList>
            <person name="Murata T."/>
            <person name="Masunaga T."/>
            <person name="Shimizu H."/>
            <person name="Takizawa Y."/>
            <person name="Ishiko A."/>
            <person name="Hatta N."/>
            <person name="Nishikawa T."/>
        </authorList>
    </citation>
    <scope>VARIANT DDEB ALA-2028</scope>
    <scope>VARIANT EBP ARG-2028</scope>
</reference>
<reference key="40">
    <citation type="journal article" date="2000" name="J. Invest. Dermatol.">
        <title>Combination of novel premature termination codon and glycine substitution mutations in COL7A1 leads to moderately severe recessive dystrophic epidermolysis bullosa.</title>
        <authorList>
            <person name="Masunaga T."/>
            <person name="Shimizu H."/>
            <person name="Takizawa Y."/>
            <person name="Uitto J."/>
            <person name="Nishikawa T."/>
        </authorList>
    </citation>
    <scope>VARIANT RDEB ARG-1812</scope>
</reference>
<reference key="41">
    <citation type="journal article" date="2001" name="Br. J. Dermatol.">
        <title>Generalized dystrophic epidermolysis bullosa: identification of a novel, homozygous glycine substitution, G2031S, in exon 73 of COL7A1 in monozygous triplets.</title>
        <authorList>
            <person name="Nordal E.J."/>
            <person name="Mecklenbeck S."/>
            <person name="Hausser I."/>
            <person name="Skranes J."/>
            <person name="Bruckner-Tuderman L."/>
            <person name="Gedde-Dahl T. Jr."/>
        </authorList>
    </citation>
    <scope>VARIANT RDEB SER-2031</scope>
</reference>
<reference key="42">
    <citation type="journal article" date="2002" name="Arch. Dermatol.">
        <title>Toenail dystrophy with COL7A1 glycine substitution mutations segregates as an autosomal dominant trait in 2 families with dystrophic epidermolysis bullosa.</title>
        <authorList>
            <person name="Sato-Matsumura K.C."/>
            <person name="Yasukawa K."/>
            <person name="Tomita Y."/>
            <person name="Shimizu H."/>
        </authorList>
    </citation>
    <scope>VARIANTS NDNC8 ARG-1595 AND ARG-1815</scope>
</reference>
<reference key="43">
    <citation type="journal article" date="2002" name="J. Invest. Dermatol.">
        <title>EB simplex superficialis resulting from a mutation in the type VII collagen gene.</title>
        <authorList>
            <person name="Martinez-Mir A."/>
            <person name="Liu J."/>
            <person name="Gordon D."/>
            <person name="Weiner M.S."/>
            <person name="Ahmad W."/>
            <person name="Fine J.D."/>
            <person name="Ott J."/>
            <person name="Gilliam T.C."/>
            <person name="Christiano A.M."/>
        </authorList>
    </citation>
    <scope>VARIANT EBDSC ARG-2034</scope>
</reference>
<reference key="44">
    <citation type="journal article" date="2003" name="Pediatr. Dermatol.">
        <title>Dystrophic epidermolysis bullosa inversa with COL7A1 mutations and absence of GDA-J/F3 protein.</title>
        <authorList>
            <person name="Kahofer P."/>
            <person name="Bruckner-Tuderman L."/>
            <person name="Metze D."/>
            <person name="Lemmink H."/>
            <person name="Scheffer H."/>
            <person name="Smolle J."/>
        </authorList>
    </citation>
    <scope>VARIANTS RDEB ARG-142 AND CYS-2069</scope>
</reference>
<reference key="45">
    <citation type="journal article" date="2006" name="Science">
        <title>The consensus coding sequences of human breast and colorectal cancers.</title>
        <authorList>
            <person name="Sjoeblom T."/>
            <person name="Jones S."/>
            <person name="Wood L.D."/>
            <person name="Parsons D.W."/>
            <person name="Lin J."/>
            <person name="Barber T.D."/>
            <person name="Mandelker D."/>
            <person name="Leary R.J."/>
            <person name="Ptak J."/>
            <person name="Silliman N."/>
            <person name="Szabo S."/>
            <person name="Buckhaults P."/>
            <person name="Farrell C."/>
            <person name="Meeh P."/>
            <person name="Markowitz S.D."/>
            <person name="Willis J."/>
            <person name="Dawson D."/>
            <person name="Willson J.K.V."/>
            <person name="Gazdar A.F."/>
            <person name="Hartigan J."/>
            <person name="Wu L."/>
            <person name="Liu C."/>
            <person name="Parmigiani G."/>
            <person name="Park B.H."/>
            <person name="Bachman K.E."/>
            <person name="Papadopoulos N."/>
            <person name="Vogelstein B."/>
            <person name="Kinzler K.W."/>
            <person name="Velculescu V.E."/>
        </authorList>
    </citation>
    <scope>VARIANTS [LARGE SCALE ANALYSIS] PRO-119; THR-1364 AND TRP-1366</scope>
</reference>
<reference key="46">
    <citation type="journal article" date="2010" name="Hum. Genet.">
        <title>Novel human pathological mutations. Gene symbol: COL7A1. Disease: Epidermolysis bullosa dystrophica.</title>
        <authorList>
            <person name="Garcia M."/>
            <person name="Escamez M.J."/>
            <person name="Cuadrado-Corrales N."/>
            <person name="Sanchez-Jimeno C."/>
            <person name="Illera N."/>
            <person name="Lopez-Martinez M.A."/>
            <person name="Trujillo-Tiebas M.J."/>
            <person name="Ayuso C."/>
            <person name="Del Rio M."/>
        </authorList>
    </citation>
    <scope>VARIANT RDEB ALA-2221</scope>
</reference>
<reference key="47">
    <citation type="journal article" date="2010" name="J. Dermatol. Sci.">
        <title>Analysis of the COL7A1 gene in Czech patients with dystrophic epidermolysis bullosa reveals novel and recurrent mutations.</title>
        <authorList>
            <person name="Jerabkova B."/>
            <person name="Kopeckova L."/>
            <person name="Buckova H."/>
            <person name="Vesely K."/>
            <person name="Valickova J."/>
            <person name="Fajkusova L."/>
        </authorList>
    </citation>
    <scope>VARIANTS RDEB ARG-1845; ARG-1981; GLU-2049; TRP-2063; CYS-2069; GLU-2296; ARG-2557 AND TRP-2622</scope>
    <scope>VARIANTS DDEB ARG-2003; ASP-2040; ARG-2043; ARG-2064; ARG-2070 AND ASP-2076</scope>
</reference>